<comment type="function">
    <text evidence="1 3 4 6 19 22 33 40">Component of the mechanistic target of rapamycin complex 1 (mTORC1), an evolutionarily conserved central nutrient sensor that stimulates anabolic reactions and macromolecule biosynthesis to promote cellular biomass generation and growth (PubMed:12150925, PubMed:12150926, PubMed:12747827, PubMed:24403073, PubMed:26588989, PubMed:32561715, PubMed:37541260). In response to nutrients, growth factors or amino acids, mTORC1 is recruited to the lysosome membrane and promotes protein, lipid and nucleotide synthesis by phosphorylating several substrates, such as ribosomal protein S6 kinase (RPS6KB1 and RPS6KB2) and EIF4EBP1 (4E-BP1) (PubMed:12150925, PubMed:12150926, PubMed:12747827, PubMed:24403073, PubMed:26588989, PubMed:37541260). In the same time, it inhibits catabolic pathways by phosphorylating the autophagy initiation components ULK1 and ATG13, as well as transcription factor TFEB, a master regulators of lysosomal biogenesis and autophagy (PubMed:12150925, PubMed:12150926, PubMed:12747827, PubMed:24403073, PubMed:32561715, PubMed:37541260). The mTORC1 complex is inhibited in response to starvation and amino acid depletion (PubMed:12150925, PubMed:12150926, PubMed:12747827, PubMed:24403073, PubMed:37541260). Within the mTORC1 complex, RPTOR acts both as a molecular adapter, which (1) mediates recruitment of mTORC1 to lysosomal membranes via interaction with small GTPases Rag (RagA/RRAGA, RagB/RRAGB, RagC/RRAGC and/or RagD/RRAGD), and a (2) substrate-specific adapter, which promotes substrate specificity by binding to TOS motif-containing proteins and direct them towards the active site of the MTOR kinase domain for phosphorylation (PubMed:12747827, PubMed:24403073, PubMed:26588989, PubMed:37541260). mTORC1 complex regulates many cellular processes, such as odontoblast and osteoclast differentiation or neuronal transmission (By similarity). mTORC1 complex in excitatory neuronal transmission is required for the prosocial behavior induced by the psychoactive substance lysergic acid diethylamide (LSD) (By similarity).</text>
</comment>
<comment type="subunit">
    <text evidence="3 4 5 6 7 8 9 11 16 17 18 19 20 21 23 24 25 28 31 32 35 36 37 39">Part of the mechanistic target of rapamycin complex 1 (mTORC1) which contains MTOR, MLST8 and RPTOR (PubMed:12408816, PubMed:24403073, PubMed:25940091, PubMed:27909983, PubMed:29236692, PubMed:31601708, PubMed:31601764, PubMed:36697823). mTORC1 associates with AKT1S1/PRAS40, which inhibits its activity (PubMed:17386266, PubMed:31601764). mTORC1 associates with DEPTOR, which regulates its activity (PubMed:34519268, PubMed:34519269). mTORC1 binds to and is inhibited by FKBP12-rapamycin (PubMed:12408816, PubMed:15066126). Forms a complex with MTOR under both leucine-rich and -poor conditions (PubMed:12408816, PubMed:25940091, PubMed:31601708, PubMed:31601764). Interacts with (via TOS motifs) EIF4EBP1 and RPS6KB1; interaction is independent of its association with MTOR (PubMed:12150925, PubMed:12150926, PubMed:12747827, PubMed:24403073). Binds preferentially to poorly or non-phosphorylated forms of EIF4EBP1, and this binding is critical to the ability of MTOR to catalyze phosphorylation (PubMed:12747827, PubMed:24403073). Interacts with ULK1 in a nutrient-dependent manner; the interaction is reduced during starvation (PubMed:19211835). Interacts with GTP-bound form of RagA/RRAGA or RagB/RRAGB and GDP-bound form of RagC/RRAGC or RagD/RRAGD, promoting recruitment of mTORC1 to the lysosomes (PubMed:31601708, PubMed:31601764). Interacts (when phosphorylated by AMPK) with 14-3-3 protein, leading to inhibition of its activity (PubMed:18439900). Interacts with SPAG5; SPAG5 competes with MTOR for RPTOR-binding, resulting in decreased mTORC1 formation (PubMed:23953116). Interacts with WAC; WAC positively regulates MTOR activity by promoting the assembly of the TTT complex composed of TELO2, TTI1 and TTI2 and the RUVBL complex composed of RUVBL1 and RUVBL2 into the TTT-RUVBL complex which leads to the dimerization of the mTORC1 complex and its subsequent activation (PubMed:26812014). Interacts with G3BP1 (PubMed:23953116). The complex formed with G3BP1 and SPAG5 is increased by oxidative stress (PubMed:23953116). Interacts with HTR6 (PubMed:23027611). Interacts with PIH1D1 (PubMed:24036451). Interacts with LARP1 (PubMed:25940091). Interacts with BRAT1 (PubMed:25657994). Interacts with SIK3 (PubMed:30232230). Interacts with SLC38A7; this interaction mediates the recruitment of mTORC1 to the lysosome and its subsequent activation (PubMed:35561222).</text>
</comment>
<comment type="subunit">
    <text evidence="26">(Microbial infection) Interacts with vaccinia virus protein F17; this interaction dysregulates mTOR.</text>
</comment>
<comment type="interaction">
    <interactant intactId="EBI-1567928">
        <id>Q8N122</id>
    </interactant>
    <interactant intactId="EBI-74090">
        <id>Q13541</id>
        <label>EIF4EBP1</label>
    </interactant>
    <organismsDiffer>false</organismsDiffer>
    <experiments>5</experiments>
</comment>
<comment type="interaction">
    <interactant intactId="EBI-1567928">
        <id>Q8N122</id>
    </interactant>
    <interactant intactId="EBI-1047359">
        <id>Q13283</id>
        <label>G3BP1</label>
    </interactant>
    <organismsDiffer>false</organismsDiffer>
    <experiments>4</experiments>
</comment>
<comment type="interaction">
    <interactant intactId="EBI-1567928">
        <id>Q8N122</id>
    </interactant>
    <interactant intactId="EBI-1237062">
        <id>Q8WUA4</id>
        <label>GTF3C2</label>
    </interactant>
    <organismsDiffer>false</organismsDiffer>
    <experiments>3</experiments>
</comment>
<comment type="interaction">
    <interactant intactId="EBI-1567928">
        <id>Q8N122</id>
    </interactant>
    <interactant intactId="EBI-356077">
        <id>Q9P2J5</id>
        <label>LARS1</label>
    </interactant>
    <organismsDiffer>false</organismsDiffer>
    <experiments>3</experiments>
</comment>
<comment type="interaction">
    <interactant intactId="EBI-1567928">
        <id>Q8N122</id>
    </interactant>
    <interactant intactId="EBI-286483">
        <id>P45983</id>
        <label>MAPK8</label>
    </interactant>
    <organismsDiffer>false</organismsDiffer>
    <experiments>6</experiments>
</comment>
<comment type="interaction">
    <interactant intactId="EBI-1567928">
        <id>Q8N122</id>
    </interactant>
    <interactant intactId="EBI-1387471">
        <id>Q9BVC4</id>
        <label>MLST8</label>
    </interactant>
    <organismsDiffer>false</organismsDiffer>
    <experiments>3</experiments>
</comment>
<comment type="interaction">
    <interactant intactId="EBI-1567928">
        <id>Q8N122</id>
    </interactant>
    <interactant intactId="EBI-371938">
        <id>Q13615</id>
        <label>MTMR3</label>
    </interactant>
    <organismsDiffer>false</organismsDiffer>
    <experiments>3</experiments>
</comment>
<comment type="interaction">
    <interactant intactId="EBI-1567928">
        <id>Q8N122</id>
    </interactant>
    <interactant intactId="EBI-359260">
        <id>P42345</id>
        <label>MTOR</label>
    </interactant>
    <organismsDiffer>false</organismsDiffer>
    <experiments>48</experiments>
</comment>
<comment type="interaction">
    <interactant intactId="EBI-1567928">
        <id>Q8N122</id>
    </interactant>
    <interactant intactId="EBI-1046542">
        <id>Q8TCU6</id>
        <label>PREX1</label>
    </interactant>
    <organismsDiffer>false</organismsDiffer>
    <experiments>2</experiments>
</comment>
<comment type="interaction">
    <interactant intactId="EBI-1567928">
        <id>Q8N122</id>
    </interactant>
    <interactant intactId="EBI-716845">
        <id>P62820</id>
        <label>RAB1A</label>
    </interactant>
    <organismsDiffer>false</organismsDiffer>
    <experiments>4</experiments>
</comment>
<comment type="interaction">
    <interactant intactId="EBI-1567928">
        <id>Q8N122</id>
    </interactant>
    <interactant intactId="EBI-1802965">
        <id>Q96EB6</id>
        <label>SIRT1</label>
    </interactant>
    <organismsDiffer>false</organismsDiffer>
    <experiments>3</experiments>
</comment>
<comment type="interaction">
    <interactant intactId="EBI-1567928">
        <id>Q8N122</id>
    </interactant>
    <interactant intactId="EBI-413317">
        <id>Q96R06</id>
        <label>SPAG5</label>
    </interactant>
    <organismsDiffer>false</organismsDiffer>
    <experiments>9</experiments>
</comment>
<comment type="interaction">
    <interactant intactId="EBI-1567928">
        <id>Q8N122</id>
    </interactant>
    <interactant intactId="EBI-908831">
        <id>O75385</id>
        <label>ULK1</label>
    </interactant>
    <organismsDiffer>false</organismsDiffer>
    <experiments>3</experiments>
</comment>
<comment type="interaction">
    <interactant intactId="EBI-1567928">
        <id>Q8N122</id>
    </interactant>
    <interactant intactId="EBI-1571628">
        <id>Q9JLN9</id>
        <label>Mtor</label>
    </interactant>
    <organismsDiffer>true</organismsDiffer>
    <experiments>5</experiments>
</comment>
<comment type="interaction">
    <interactant intactId="EBI-1567928">
        <id>Q8N122</id>
    </interactant>
    <interactant intactId="EBI-2639458">
        <id>P67999</id>
        <label>Rps6kb1</label>
    </interactant>
    <organismsDiffer>true</organismsDiffer>
    <experiments>2</experiments>
</comment>
<comment type="subcellular location">
    <subcellularLocation>
        <location evidence="31 32">Lysosome membrane</location>
    </subcellularLocation>
    <subcellularLocation>
        <location evidence="14">Cytoplasm</location>
    </subcellularLocation>
    <subcellularLocation>
        <location evidence="17 21">Cytoplasmic granule</location>
    </subcellularLocation>
    <text evidence="17 31 32">Targeting to lysosomes depends on amino acid availability: recruited to lysosome membranes via interaction with GTP-bound form of RagA/RRAGA (or RagB/RRAGB) in complex with the GDP-bound form of RagC/RRAGC (or RagD/RRAGD), promoting recruitment of mTORC1 to the lysosomes (PubMed:31601708, PubMed:31601764). In arsenite-stressed cells, accumulates in stress granules when associated with SPAG5 and association with lysosomes is drastically decreased (PubMed:23953116).</text>
</comment>
<comment type="alternative products">
    <event type="alternative splicing"/>
    <isoform>
        <id>Q8N122-1</id>
        <name>1</name>
        <sequence type="displayed"/>
    </isoform>
    <isoform>
        <id>Q8N122-2</id>
        <name>2</name>
        <sequence type="described" ref="VSP_010174"/>
    </isoform>
    <isoform>
        <id>Q8N122-3</id>
        <name>3</name>
        <name evidence="45">RAPTOR_v2</name>
        <sequence type="described" ref="VSP_054042"/>
    </isoform>
</comment>
<comment type="tissue specificity">
    <text evidence="3 5">Highly expressed in skeletal muscle, and in a lesser extent in brain, lung, small intestine, kidney and placenta.</text>
</comment>
<comment type="tissue specificity">
    <molecule>Isoform 3</molecule>
    <text evidence="12">Widely expressed, with highest levels in nasal mucosa and pituitary and lowest in spleen.</text>
</comment>
<comment type="PTM">
    <text evidence="9 10 13 15 22 29 30 40">Insulin-stimulated phosphorylation at Ser-863 by MTOR and MAPK8 regulates mTORC1 activity (PubMed:19864431). Phosphorylated at Ser-863 by NLK in response to stress, disrupting the interaction with small GTPases Rag (RagA/RRAGA, RagB/RRAGB, RagC/RRAGC and/or RagD/RRAGD), thereby preventing lysosome recruitment and activation of the mTORC1 complex (PubMed:26588989). Osmotic stress also induces phosphorylation at Ser-696, Thr-706 and Ser-863 by MAPK8 (PubMed:19864431, PubMed:22493283). Ser-863 phosphorylation is required for phosphorylation at Ser-855 and Ser-859 (PubMed:19864431). In response to nutrient limitation, phosphorylated at Ser-722 and Ser-792 by AMPK; phosphorylation promotes interaction with 14-3-3 proteins, leading to negative regulation of the mTORC1 complex (PubMed:18439900). Phosphorylation at Ser-722 and Ser-792 by AMPK in response to glucose starvation inhibits O-GlcNAcylation by OGT and subsequent activation of mTORC1 (PubMed:37541260). In response to growth factors, phosphorylated at Ser-719, Ser-721 and Ser-722 by RPS6KA1, which stimulates mTORC1 activity (PubMed:18439900, PubMed:18722121). Phosphorylation at Ser-791 by PKA downstream of cAMP inhibits the mTORC1 complex (PubMed:31112131). Phosphorylated at Ser-877 by TBK1, leading to negative regulation of the mTORC1 complex (PubMed:31530866).</text>
</comment>
<comment type="PTM">
    <text evidence="40">O-GlcNAcylated by OGT upon glucose sufficiency, promoting interaction with small GTPases Rag (RagA/RRAGA, RagB/RRAGB, RagC/RRAGC and/or RagD/RRAGD) and subsequent recruitment of mTORC1 to lysosomal membranes, leading to activation of the mTORC1 complex (PubMed:37541260). Phosphorylation at Ser-722 and Ser-792 by AMPK in response to glucose starvation inhibits O-GlcNAcylation (PubMed:37541260).</text>
</comment>
<comment type="PTM">
    <text evidence="1 27 33">Acetylation at Lys-1097 by EP300/p300 in response to leucine metabolite acetyl-coA promotes its activity, leading to activation of the mTORC1 complex (PubMed:30197302, PubMed:32561715). Acetylation is decreased in response to fasting (By similarity).</text>
</comment>
<comment type="PTM">
    <text evidence="34 38">Ubiquitinated, leading to its degradation by the proteasome (PubMed:34290272, PubMed:35927303). Deubiquitinated by OTUB1 via a non-catalytic mechanism (PubMed:35927303). Ubiquitinated by an E3 ubiquitin ligase complex containing VHL (PubMed:34290272).</text>
</comment>
<comment type="similarity">
    <text evidence="46">Belongs to the WD repeat RAPTOR family.</text>
</comment>
<protein>
    <recommendedName>
        <fullName evidence="46">Regulatory-associated protein of mTOR</fullName>
        <shortName evidence="42 43">Raptor</shortName>
    </recommendedName>
    <alternativeName>
        <fullName evidence="43">p150 target of rapamycin (TOR)-scaffold protein</fullName>
    </alternativeName>
</protein>
<sequence length="1335" mass="149038">MESEMLQSPLLGLGEEDEADLTDWNLPLAFMKKRHCEKIEGSKSLAQSWRMKDRMKTVSVALVLCLNVGVDPPDVVKTTPCARLECWIDPLSMGPQKALETIGANLQKQYENWQPRARYKQSLDPTVDEVKKLCTSLRRNAKEERVLFHYNGHGVPRPTVNGEVWVFNKNYTQYIPLSIYDLQTWMGSPSIFVYDCSNAGLIVKSFKQFALQREQELEVAAINPNHPLAQMPLPPSMKNCIQLAACEATELLPMIPDLPADLFTSCLTTPIKIALRWFCMQKCVSLVPGVTLDLIEKIPGRLNDRRTPLGELNWIFTAITDTIAWNVLPRDLFQKLFRQDLLVASLFRNFLLAERIMRSYNCTPVSSPRLPPTYMHAMWQAWDLAVDICLSQLPTIIEEGTAFRHSPFFAEQLTAFQVWLTMGVENRNPPEQLPIVLQVLLSQVHRLRALDLLGRFLDLGPWAVSLALSVGIFPYVLKLLQSSARELRPLLVFIWAKILAVDSSCQADLVKDNGHKYFLSVLADPYMPAEHRTMTAFILAVIVNSYHTGQEACLQGNLIAICLEQLNDPHPLLRQWVAICLGRIWQNFDSARWCGVRDSAHEKLYSLLSDPIPEVRCAAVFALGTFVGNSAERTDHSTTIDHNVAMMLAQLVSDGSPMVRKELVVALSHLVVQYESNFCTVALQFIEEEKNYALPSPATTEGGSLTPVRDSPCTPRLRSVSSYGNIRAVATARSLNKSLQNLSLTEESGGAVAFSPGNLSTSSSASSTLGSPENEEHILSFETIDKMRRASSYSSLNSLIGVSFNSVYTQIWRVLLHLAADPYPEVSDVAMKVLNSIAYKATVNARPQRVLDTSSLTQSAPASPTNKGVHIHQAGGSPPASSTSSSSLTNDVAKQPVSRDLPSGRPGTTGPAGAQYTPHSHQFPRTRKMFDKGPEQTADDADDAAGHKSFISATVQTGFCDWSARYFAQPVMKIPEEHDLESQIRKEREWRFLRNSRVRRQAQQVIQKGITRLDDQIFLNRNPGVPSVVKFHPFTPCIAVADKDSICFWDWEKGEKLDYFHNGNPRYTRVTAMEYLNGQDCSLLLTATDDGAIRVWKNFADLEKNPEMVTAWQGLSDMLPTTRGAGMVVDWEQETGLLMSSGDVRIVRIWDTDREMKVQDIPTGADSCVTSLSCDSHRSLIVAGLGDGSIRVYDRRMALSECRVMTYREHTAWVVKASLQKRPDGHIVSVSVNGDVRIFDPRMPESVNVLQIVKGLTALDIHPQADLIACGSVNQFTAIYNSSGELINNIKYYDGFMGQRVGAISCLAFHPHWPHLAVGSNDYYISVYSVEKRVR</sequence>
<organism>
    <name type="scientific">Homo sapiens</name>
    <name type="common">Human</name>
    <dbReference type="NCBI Taxonomy" id="9606"/>
    <lineage>
        <taxon>Eukaryota</taxon>
        <taxon>Metazoa</taxon>
        <taxon>Chordata</taxon>
        <taxon>Craniata</taxon>
        <taxon>Vertebrata</taxon>
        <taxon>Euteleostomi</taxon>
        <taxon>Mammalia</taxon>
        <taxon>Eutheria</taxon>
        <taxon>Euarchontoglires</taxon>
        <taxon>Primates</taxon>
        <taxon>Haplorrhini</taxon>
        <taxon>Catarrhini</taxon>
        <taxon>Hominidae</taxon>
        <taxon>Homo</taxon>
    </lineage>
</organism>
<name>RPTOR_HUMAN</name>
<feature type="chain" id="PRO_0000051200" description="Regulatory-associated protein of mTOR">
    <location>
        <begin position="1"/>
        <end position="1335"/>
    </location>
</feature>
<feature type="repeat" description="WD 1">
    <location>
        <begin position="1020"/>
        <end position="1061"/>
    </location>
</feature>
<feature type="repeat" description="WD 2">
    <location>
        <begin position="1065"/>
        <end position="1106"/>
    </location>
</feature>
<feature type="repeat" description="WD 3">
    <location>
        <begin position="1121"/>
        <end position="1160"/>
    </location>
</feature>
<feature type="repeat" description="WD 4">
    <location>
        <begin position="1164"/>
        <end position="1203"/>
    </location>
</feature>
<feature type="repeat" description="WD 5">
    <location>
        <begin position="1209"/>
        <end position="1249"/>
    </location>
</feature>
<feature type="repeat" description="WD 6">
    <location>
        <begin position="1251"/>
        <end position="1291"/>
    </location>
</feature>
<feature type="repeat" description="WD 7">
    <location>
        <begin position="1299"/>
        <end position="1335"/>
    </location>
</feature>
<feature type="region of interest" description="Disordered" evidence="2">
    <location>
        <begin position="850"/>
        <end position="943"/>
    </location>
</feature>
<feature type="compositionally biased region" description="Polar residues" evidence="2">
    <location>
        <begin position="851"/>
        <end position="866"/>
    </location>
</feature>
<feature type="compositionally biased region" description="Low complexity" evidence="2">
    <location>
        <begin position="874"/>
        <end position="887"/>
    </location>
</feature>
<feature type="modified residue" description="Phosphoserine" evidence="30">
    <location>
        <position position="44"/>
    </location>
</feature>
<feature type="modified residue" description="Phosphoserine" evidence="30">
    <location>
        <position position="122"/>
    </location>
</feature>
<feature type="modified residue" description="Phosphoserine; by MAPK8" evidence="13 15 30 69">
    <location>
        <position position="696"/>
    </location>
</feature>
<feature type="modified residue" description="Phosphothreonine; by MAPK8" evidence="13 15 30">
    <location>
        <position position="706"/>
    </location>
</feature>
<feature type="modified residue" description="Phosphoserine; by RPS6KA1" evidence="10 63 69">
    <location>
        <position position="719"/>
    </location>
</feature>
<feature type="modified residue" description="Phosphoserine; by RPS6KA1" evidence="10">
    <location>
        <position position="721"/>
    </location>
</feature>
<feature type="modified residue" description="Phosphoserine; by AMPK and RPS6KA1" evidence="9 10 40 69">
    <location>
        <position position="722"/>
    </location>
</feature>
<feature type="modified residue" description="Phosphoserine" evidence="70">
    <location>
        <position position="738"/>
    </location>
</feature>
<feature type="modified residue" description="Phosphoserine; by PKA" evidence="29">
    <location>
        <position position="791"/>
    </location>
</feature>
<feature type="modified residue" description="Phosphoserine; by AMPK" evidence="9 40">
    <location>
        <position position="792"/>
    </location>
</feature>
<feature type="modified residue" description="Phosphoserine" evidence="30">
    <location>
        <position position="836"/>
    </location>
</feature>
<feature type="modified residue" description="Phosphoserine" evidence="13">
    <location>
        <position position="855"/>
    </location>
</feature>
<feature type="modified residue" description="Phosphoserine; by MTOR" evidence="13 30 63 66 67 69">
    <location>
        <position position="859"/>
    </location>
</feature>
<feature type="modified residue" description="Phosphoserine; by MAPK8, MTOR and NLK" evidence="13 15 22 30 62 63 66 67 68 69">
    <location>
        <position position="863"/>
    </location>
</feature>
<feature type="modified residue" description="Phosphothreonine" evidence="69">
    <location>
        <position position="865"/>
    </location>
</feature>
<feature type="modified residue" description="Phosphoserine; by TBK1" evidence="13 22 30 63 64 65 66 67 68 69 70">
    <location>
        <position position="877"/>
    </location>
</feature>
<feature type="modified residue" description="Phosphoserine" evidence="30">
    <location>
        <position position="982"/>
    </location>
</feature>
<feature type="modified residue" description="N6-acetyllysine" evidence="27 33">
    <location>
        <position position="1097"/>
    </location>
</feature>
<feature type="glycosylation site" description="O-linked (GlcNAc) threonine" evidence="40">
    <location>
        <position position="700"/>
    </location>
</feature>
<feature type="cross-link" description="Glycyl lysine isopeptide (Lys-Gly) (interchain with G-Cter in ubiquitin)" evidence="47">
    <location>
        <position position="932"/>
    </location>
</feature>
<feature type="cross-link" description="Glycyl lysine isopeptide (Lys-Gly) (interchain with G-Cter in ubiquitin)" evidence="47">
    <location>
        <position position="948"/>
    </location>
</feature>
<feature type="splice variant" id="VSP_010174" description="In isoform 2." evidence="44">
    <location>
        <begin position="380"/>
        <end position="1335"/>
    </location>
</feature>
<feature type="splice variant" id="VSP_054042" description="In isoform 3." evidence="45">
    <location>
        <begin position="504"/>
        <end position="661"/>
    </location>
</feature>
<feature type="mutagenesis site" description="In alpha24 mutant; abolished interaction with GTP-bound RRAGA and recruitment to lysosomes." evidence="31">
    <original>NLIAICLE</original>
    <variation>ALIFICLA</variation>
    <location>
        <begin position="557"/>
        <end position="564"/>
    </location>
</feature>
<feature type="mutagenesis site" description="In alphax3 mutant; abolished interaction with GTP-bound RRAGA and recruitment to lysosomes; when associated with E-597 and A-635." evidence="31">
    <original>A</original>
    <variation>F</variation>
    <location>
        <position position="560"/>
    </location>
</feature>
<feature type="mutagenesis site" description="In alpha26 mutant; abolished interaction with GTP-bound RRAGA and recruitment to lysosomes." evidence="31">
    <original>CGVRD</original>
    <variation>AGVYA</variation>
    <location>
        <begin position="594"/>
        <end position="598"/>
    </location>
</feature>
<feature type="mutagenesis site" description="In alphax3 mutant; abolished interaction with GTP-bound RRAGA and recruitment to lysosomes; when associated with F-560 and A-635." evidence="31">
    <original>R</original>
    <variation>E</variation>
    <location>
        <position position="597"/>
    </location>
</feature>
<feature type="mutagenesis site" description="In alpha29 mutant; abolished interaction with GTP-bound RRAGA and recruitment to lysosomes." evidence="31">
    <original>TDH</original>
    <variation>ARE</variation>
    <location>
        <begin position="634"/>
        <end position="636"/>
    </location>
</feature>
<feature type="mutagenesis site" description="In alphax3 mutant; abolished interaction with GTP-bound RRAGA and recruitment to lysosomes; when associated with F-560 and E-597." evidence="31">
    <original>D</original>
    <variation>A</variation>
    <location>
        <position position="635"/>
    </location>
</feature>
<feature type="mutagenesis site" description="Does not affect O-GlcNAcylation in response to glucose sufficiency." evidence="40">
    <original>T</original>
    <variation>A</variation>
    <location>
        <position position="699"/>
    </location>
</feature>
<feature type="mutagenesis site" description="Abolished O-GlcNAcylation in response to glucose sufficiency, leading to decreased mTORC1 activation." evidence="40">
    <original>T</original>
    <variation>A</variation>
    <location>
        <position position="700"/>
    </location>
</feature>
<feature type="mutagenesis site" description="Abolishes AMPK-mediated phosphorylation; when associated with A-792. Increased O-GlcNAcylation; when associated with A-792." evidence="9 40">
    <original>S</original>
    <variation>A</variation>
    <location>
        <position position="722"/>
    </location>
</feature>
<feature type="mutagenesis site" description="Does not affect ubiquitination." evidence="38">
    <original>K</original>
    <variation>R</variation>
    <location>
        <position position="737"/>
    </location>
</feature>
<feature type="mutagenesis site" description="Abolished phosphorylation after forskolin treatment." evidence="29">
    <original>S</original>
    <variation>A</variation>
    <variation>D</variation>
    <location>
        <position position="791"/>
    </location>
</feature>
<feature type="mutagenesis site" description="Abolishes AMPK-mediated phosphorylation; when associated with A-722. Increased O-GlcNAcylation; when associated with A-722. Does not affect phosphorylation after forskolin treatment." evidence="9 29 40">
    <original>S</original>
    <variation>A</variation>
    <location>
        <position position="792"/>
    </location>
</feature>
<feature type="mutagenesis site" description="Abolished phosphorylation by NLK, leading to impaired inhibition of the mTORC1 complex in response to osmotic stress." evidence="22">
    <original>S</original>
    <variation>A</variation>
    <location>
        <position position="863"/>
    </location>
</feature>
<feature type="mutagenesis site" description="Mimics phosphorylation, leading to impaired interaction with small GTPases Rag and activation of the mTORC1 complex." evidence="22">
    <original>S</original>
    <variation>D</variation>
    <location>
        <position position="863"/>
    </location>
</feature>
<feature type="mutagenesis site" description="Decreased phosphorylation, leading to increased activity of the mTORC1 complex." evidence="30">
    <original>S</original>
    <variation>A</variation>
    <location>
        <position position="877"/>
    </location>
</feature>
<feature type="mutagenesis site" description="Does not affect ubiquitination." evidence="38">
    <original>K</original>
    <variation>R</variation>
    <location>
        <position position="894"/>
    </location>
</feature>
<feature type="mutagenesis site" description="In Clw1 mutant; abolished interaction with GTP-bound RRAGA and recruitment to lysosomes without affecting the composition of the mTORC1 complex." evidence="31">
    <location>
        <begin position="916"/>
        <end position="936"/>
    </location>
</feature>
<feature type="mutagenesis site" description="In Clw2 mutant; abolished interaction with GTP-bound RRAGA and recruitment to lysosomes without affecting the composition of the mTORC1 complex." evidence="31">
    <original>HSH</original>
    <variation>AAA</variation>
    <location>
        <begin position="919"/>
        <end position="921"/>
    </location>
</feature>
<feature type="mutagenesis site" description="In Clw3 mutant; abolished interaction with GTP-bound RRAGA and recruitment to lysosomes without affecting the composition of the mTORC1 complex." evidence="31">
    <original>RTRK</original>
    <variation>ATAA</variation>
    <location>
        <begin position="925"/>
        <end position="928"/>
    </location>
</feature>
<feature type="mutagenesis site" description="Decreased ubiquitination." evidence="38">
    <original>K</original>
    <variation>R</variation>
    <location>
        <position position="932"/>
    </location>
</feature>
<feature type="mutagenesis site" description="In Clw4 mutant; abolished interaction with GTP-bound RRAGA and recruitment to lysosomes without affecting the composition of the mTORC1 complex." evidence="31">
    <original>GPE</original>
    <variation>RGR</variation>
    <location>
        <begin position="933"/>
        <end position="935"/>
    </location>
</feature>
<feature type="mutagenesis site" description="Decreased ubiquitination." evidence="38">
    <original>K</original>
    <variation>R</variation>
    <location>
        <position position="948"/>
    </location>
</feature>
<feature type="mutagenesis site" description="Reduced acetylation, leading to decreased activation of the mTORC complex." evidence="27">
    <original>K</original>
    <variation>R</variation>
    <location>
        <position position="1097"/>
    </location>
</feature>
<feature type="sequence conflict" description="In Ref. 6; BAA92541." evidence="46" ref="6">
    <original>LE</original>
    <variation>RQ</variation>
    <location>
        <begin position="217"/>
        <end position="218"/>
    </location>
</feature>
<feature type="helix" evidence="74">
    <location>
        <begin position="19"/>
        <end position="25"/>
    </location>
</feature>
<feature type="helix" evidence="74">
    <location>
        <begin position="33"/>
        <end position="36"/>
    </location>
</feature>
<feature type="strand" evidence="74">
    <location>
        <begin position="57"/>
        <end position="64"/>
    </location>
</feature>
<feature type="strand" evidence="75">
    <location>
        <begin position="73"/>
        <end position="75"/>
    </location>
</feature>
<feature type="helix" evidence="71">
    <location>
        <begin position="85"/>
        <end position="87"/>
    </location>
</feature>
<feature type="helix" evidence="74">
    <location>
        <begin position="90"/>
        <end position="92"/>
    </location>
</feature>
<feature type="helix" evidence="74">
    <location>
        <begin position="95"/>
        <end position="111"/>
    </location>
</feature>
<feature type="strand" evidence="74">
    <location>
        <begin position="116"/>
        <end position="124"/>
    </location>
</feature>
<feature type="helix" evidence="74">
    <location>
        <begin position="127"/>
        <end position="141"/>
    </location>
</feature>
<feature type="strand" evidence="74">
    <location>
        <begin position="144"/>
        <end position="151"/>
    </location>
</feature>
<feature type="strand" evidence="73">
    <location>
        <begin position="153"/>
        <end position="155"/>
    </location>
</feature>
<feature type="strand" evidence="74">
    <location>
        <begin position="162"/>
        <end position="167"/>
    </location>
</feature>
<feature type="strand" evidence="74">
    <location>
        <begin position="171"/>
        <end position="178"/>
    </location>
</feature>
<feature type="helix" evidence="74">
    <location>
        <begin position="179"/>
        <end position="185"/>
    </location>
</feature>
<feature type="strand" evidence="74">
    <location>
        <begin position="188"/>
        <end position="196"/>
    </location>
</feature>
<feature type="turn" evidence="74">
    <location>
        <begin position="197"/>
        <end position="199"/>
    </location>
</feature>
<feature type="helix" evidence="74">
    <location>
        <begin position="200"/>
        <end position="215"/>
    </location>
</feature>
<feature type="helix" evidence="73">
    <location>
        <begin position="227"/>
        <end position="230"/>
    </location>
</feature>
<feature type="helix" evidence="74">
    <location>
        <begin position="237"/>
        <end position="239"/>
    </location>
</feature>
<feature type="strand" evidence="74">
    <location>
        <begin position="240"/>
        <end position="246"/>
    </location>
</feature>
<feature type="strand" evidence="72">
    <location>
        <begin position="256"/>
        <end position="258"/>
    </location>
</feature>
<feature type="helix" evidence="74">
    <location>
        <begin position="262"/>
        <end position="268"/>
    </location>
</feature>
<feature type="helix" evidence="74">
    <location>
        <begin position="270"/>
        <end position="278"/>
    </location>
</feature>
<feature type="helix" evidence="74">
    <location>
        <begin position="282"/>
        <end position="286"/>
    </location>
</feature>
<feature type="helix" evidence="74">
    <location>
        <begin position="292"/>
        <end position="296"/>
    </location>
</feature>
<feature type="strand" evidence="73">
    <location>
        <begin position="302"/>
        <end position="304"/>
    </location>
</feature>
<feature type="strand" evidence="72">
    <location>
        <begin position="305"/>
        <end position="307"/>
    </location>
</feature>
<feature type="helix" evidence="74">
    <location>
        <begin position="308"/>
        <end position="327"/>
    </location>
</feature>
<feature type="helix" evidence="74">
    <location>
        <begin position="330"/>
        <end position="337"/>
    </location>
</feature>
<feature type="helix" evidence="74">
    <location>
        <begin position="341"/>
        <end position="358"/>
    </location>
</feature>
<feature type="turn" evidence="74">
    <location>
        <begin position="359"/>
        <end position="361"/>
    </location>
</feature>
<feature type="strand" evidence="74">
    <location>
        <begin position="365"/>
        <end position="368"/>
    </location>
</feature>
<feature type="helix" evidence="74">
    <location>
        <begin position="378"/>
        <end position="389"/>
    </location>
</feature>
<feature type="helix" evidence="74">
    <location>
        <begin position="390"/>
        <end position="392"/>
    </location>
</feature>
<feature type="helix" evidence="74">
    <location>
        <begin position="393"/>
        <end position="398"/>
    </location>
</feature>
<feature type="helix" evidence="74">
    <location>
        <begin position="408"/>
        <end position="422"/>
    </location>
</feature>
<feature type="helix" evidence="72">
    <location>
        <begin position="423"/>
        <end position="425"/>
    </location>
</feature>
<feature type="helix" evidence="74">
    <location>
        <begin position="433"/>
        <end position="437"/>
    </location>
</feature>
<feature type="turn" evidence="74">
    <location>
        <begin position="443"/>
        <end position="445"/>
    </location>
</feature>
<feature type="helix" evidence="74">
    <location>
        <begin position="446"/>
        <end position="457"/>
    </location>
</feature>
<feature type="helix" evidence="74">
    <location>
        <begin position="461"/>
        <end position="469"/>
    </location>
</feature>
<feature type="helix" evidence="74">
    <location>
        <begin position="473"/>
        <end position="479"/>
    </location>
</feature>
<feature type="strand" evidence="74">
    <location>
        <begin position="485"/>
        <end position="487"/>
    </location>
</feature>
<feature type="helix" evidence="74">
    <location>
        <begin position="488"/>
        <end position="501"/>
    </location>
</feature>
<feature type="helix" evidence="72">
    <location>
        <begin position="503"/>
        <end position="505"/>
    </location>
</feature>
<feature type="helix" evidence="74">
    <location>
        <begin position="506"/>
        <end position="511"/>
    </location>
</feature>
<feature type="turn" evidence="72">
    <location>
        <begin position="512"/>
        <end position="514"/>
    </location>
</feature>
<feature type="helix" evidence="74">
    <location>
        <begin position="515"/>
        <end position="522"/>
    </location>
</feature>
<feature type="helix" evidence="74">
    <location>
        <begin position="529"/>
        <end position="543"/>
    </location>
</feature>
<feature type="helix" evidence="74">
    <location>
        <begin position="547"/>
        <end position="555"/>
    </location>
</feature>
<feature type="helix" evidence="74">
    <location>
        <begin position="558"/>
        <end position="564"/>
    </location>
</feature>
<feature type="turn" evidence="74">
    <location>
        <begin position="565"/>
        <end position="567"/>
    </location>
</feature>
<feature type="helix" evidence="74">
    <location>
        <begin position="571"/>
        <end position="584"/>
    </location>
</feature>
<feature type="turn" evidence="74">
    <location>
        <begin position="585"/>
        <end position="587"/>
    </location>
</feature>
<feature type="helix" evidence="74">
    <location>
        <begin position="589"/>
        <end position="597"/>
    </location>
</feature>
<feature type="helix" evidence="74">
    <location>
        <begin position="601"/>
        <end position="604"/>
    </location>
</feature>
<feature type="helix" evidence="74">
    <location>
        <begin position="605"/>
        <end position="609"/>
    </location>
</feature>
<feature type="helix" evidence="74">
    <location>
        <begin position="613"/>
        <end position="628"/>
    </location>
</feature>
<feature type="turn" evidence="71">
    <location>
        <begin position="630"/>
        <end position="632"/>
    </location>
</feature>
<feature type="helix" evidence="74">
    <location>
        <begin position="635"/>
        <end position="644"/>
    </location>
</feature>
<feature type="helix" evidence="74">
    <location>
        <begin position="645"/>
        <end position="653"/>
    </location>
</feature>
<feature type="helix" evidence="74">
    <location>
        <begin position="657"/>
        <end position="671"/>
    </location>
</feature>
<feature type="helix" evidence="74">
    <location>
        <begin position="675"/>
        <end position="685"/>
    </location>
</feature>
<feature type="helix" evidence="71">
    <location>
        <begin position="689"/>
        <end position="691"/>
    </location>
</feature>
<feature type="helix" evidence="72">
    <location>
        <begin position="781"/>
        <end position="788"/>
    </location>
</feature>
<feature type="strand" evidence="72">
    <location>
        <begin position="789"/>
        <end position="795"/>
    </location>
</feature>
<feature type="helix" evidence="74">
    <location>
        <begin position="807"/>
        <end position="819"/>
    </location>
</feature>
<feature type="helix" evidence="74">
    <location>
        <begin position="824"/>
        <end position="838"/>
    </location>
</feature>
<feature type="turn" evidence="72">
    <location>
        <begin position="920"/>
        <end position="922"/>
    </location>
</feature>
<feature type="helix" evidence="75">
    <location>
        <begin position="951"/>
        <end position="953"/>
    </location>
</feature>
<feature type="helix" evidence="74">
    <location>
        <begin position="959"/>
        <end position="964"/>
    </location>
</feature>
<feature type="helix" evidence="74">
    <location>
        <begin position="965"/>
        <end position="968"/>
    </location>
</feature>
<feature type="strand" evidence="74">
    <location>
        <begin position="971"/>
        <end position="973"/>
    </location>
</feature>
<feature type="helix" evidence="74">
    <location>
        <begin position="976"/>
        <end position="978"/>
    </location>
</feature>
<feature type="strand" evidence="73">
    <location>
        <begin position="979"/>
        <end position="981"/>
    </location>
</feature>
<feature type="helix" evidence="74">
    <location>
        <begin position="983"/>
        <end position="1007"/>
    </location>
</feature>
<feature type="strand" evidence="74">
    <location>
        <begin position="1015"/>
        <end position="1021"/>
    </location>
</feature>
<feature type="strand" evidence="74">
    <location>
        <begin position="1028"/>
        <end position="1031"/>
    </location>
</feature>
<feature type="strand" evidence="72">
    <location>
        <begin position="1033"/>
        <end position="1036"/>
    </location>
</feature>
<feature type="strand" evidence="74">
    <location>
        <begin position="1038"/>
        <end position="1041"/>
    </location>
</feature>
<feature type="strand" evidence="74">
    <location>
        <begin position="1043"/>
        <end position="1050"/>
    </location>
</feature>
<feature type="turn" evidence="74">
    <location>
        <begin position="1051"/>
        <end position="1054"/>
    </location>
</feature>
<feature type="strand" evidence="74">
    <location>
        <begin position="1055"/>
        <end position="1061"/>
    </location>
</feature>
<feature type="strand" evidence="74">
    <location>
        <begin position="1070"/>
        <end position="1076"/>
    </location>
</feature>
<feature type="turn" evidence="75">
    <location>
        <begin position="1077"/>
        <end position="1079"/>
    </location>
</feature>
<feature type="strand" evidence="74">
    <location>
        <begin position="1083"/>
        <end position="1088"/>
    </location>
</feature>
<feature type="turn" evidence="74">
    <location>
        <begin position="1089"/>
        <end position="1091"/>
    </location>
</feature>
<feature type="strand" evidence="74">
    <location>
        <begin position="1092"/>
        <end position="1097"/>
    </location>
</feature>
<feature type="strand" evidence="72">
    <location>
        <begin position="1102"/>
        <end position="1104"/>
    </location>
</feature>
<feature type="strand" evidence="74">
    <location>
        <begin position="1107"/>
        <end position="1113"/>
    </location>
</feature>
<feature type="strand" evidence="74">
    <location>
        <begin position="1127"/>
        <end position="1132"/>
    </location>
</feature>
<feature type="turn" evidence="74">
    <location>
        <begin position="1133"/>
        <end position="1136"/>
    </location>
</feature>
<feature type="strand" evidence="74">
    <location>
        <begin position="1137"/>
        <end position="1150"/>
    </location>
</feature>
<feature type="turn" evidence="74">
    <location>
        <begin position="1152"/>
        <end position="1154"/>
    </location>
</feature>
<feature type="strand" evidence="74">
    <location>
        <begin position="1156"/>
        <end position="1162"/>
    </location>
</feature>
<feature type="strand" evidence="74">
    <location>
        <begin position="1165"/>
        <end position="1167"/>
    </location>
</feature>
<feature type="strand" evidence="74">
    <location>
        <begin position="1169"/>
        <end position="1174"/>
    </location>
</feature>
<feature type="strand" evidence="74">
    <location>
        <begin position="1176"/>
        <end position="1178"/>
    </location>
</feature>
<feature type="strand" evidence="74">
    <location>
        <begin position="1180"/>
        <end position="1185"/>
    </location>
</feature>
<feature type="strand" evidence="71">
    <location>
        <begin position="1186"/>
        <end position="1188"/>
    </location>
</feature>
<feature type="strand" evidence="74">
    <location>
        <begin position="1190"/>
        <end position="1194"/>
    </location>
</feature>
<feature type="strand" evidence="72">
    <location>
        <begin position="1195"/>
        <end position="1197"/>
    </location>
</feature>
<feature type="turn" evidence="74">
    <location>
        <begin position="1200"/>
        <end position="1202"/>
    </location>
</feature>
<feature type="strand" evidence="74">
    <location>
        <begin position="1203"/>
        <end position="1207"/>
    </location>
</feature>
<feature type="strand" evidence="73">
    <location>
        <begin position="1210"/>
        <end position="1212"/>
    </location>
</feature>
<feature type="strand" evidence="74">
    <location>
        <begin position="1214"/>
        <end position="1220"/>
    </location>
</feature>
<feature type="strand" evidence="74">
    <location>
        <begin position="1222"/>
        <end position="1224"/>
    </location>
</feature>
<feature type="strand" evidence="74">
    <location>
        <begin position="1226"/>
        <end position="1231"/>
    </location>
</feature>
<feature type="strand" evidence="74">
    <location>
        <begin position="1236"/>
        <end position="1239"/>
    </location>
</feature>
<feature type="strand" evidence="74">
    <location>
        <begin position="1244"/>
        <end position="1250"/>
    </location>
</feature>
<feature type="strand" evidence="74">
    <location>
        <begin position="1259"/>
        <end position="1261"/>
    </location>
</feature>
<feature type="turn" evidence="72">
    <location>
        <begin position="1263"/>
        <end position="1265"/>
    </location>
</feature>
<feature type="strand" evidence="74">
    <location>
        <begin position="1268"/>
        <end position="1271"/>
    </location>
</feature>
<feature type="strand" evidence="74">
    <location>
        <begin position="1275"/>
        <end position="1280"/>
    </location>
</feature>
<feature type="turn" evidence="72">
    <location>
        <begin position="1282"/>
        <end position="1284"/>
    </location>
</feature>
<feature type="strand" evidence="74">
    <location>
        <begin position="1286"/>
        <end position="1291"/>
    </location>
</feature>
<feature type="strand" evidence="74">
    <location>
        <begin position="1304"/>
        <end position="1309"/>
    </location>
</feature>
<feature type="strand" evidence="74">
    <location>
        <begin position="1311"/>
        <end position="1313"/>
    </location>
</feature>
<feature type="strand" evidence="74">
    <location>
        <begin position="1316"/>
        <end position="1320"/>
    </location>
</feature>
<feature type="strand" evidence="74">
    <location>
        <begin position="1323"/>
        <end position="1329"/>
    </location>
</feature>
<keyword id="KW-0002">3D-structure</keyword>
<keyword id="KW-0007">Acetylation</keyword>
<keyword id="KW-0025">Alternative splicing</keyword>
<keyword id="KW-0963">Cytoplasm</keyword>
<keyword id="KW-0325">Glycoprotein</keyword>
<keyword id="KW-0945">Host-virus interaction</keyword>
<keyword id="KW-1017">Isopeptide bond</keyword>
<keyword id="KW-0458">Lysosome</keyword>
<keyword id="KW-0472">Membrane</keyword>
<keyword id="KW-0597">Phosphoprotein</keyword>
<keyword id="KW-1267">Proteomics identification</keyword>
<keyword id="KW-1185">Reference proteome</keyword>
<keyword id="KW-0677">Repeat</keyword>
<keyword id="KW-0832">Ubl conjugation</keyword>
<keyword id="KW-0853">WD repeat</keyword>
<evidence type="ECO:0000250" key="1">
    <source>
        <dbReference type="UniProtKB" id="Q8K4Q0"/>
    </source>
</evidence>
<evidence type="ECO:0000256" key="2">
    <source>
        <dbReference type="SAM" id="MobiDB-lite"/>
    </source>
</evidence>
<evidence type="ECO:0000269" key="3">
    <source>
    </source>
</evidence>
<evidence type="ECO:0000269" key="4">
    <source>
    </source>
</evidence>
<evidence type="ECO:0000269" key="5">
    <source>
    </source>
</evidence>
<evidence type="ECO:0000269" key="6">
    <source>
    </source>
</evidence>
<evidence type="ECO:0000269" key="7">
    <source>
    </source>
</evidence>
<evidence type="ECO:0000269" key="8">
    <source>
    </source>
</evidence>
<evidence type="ECO:0000269" key="9">
    <source>
    </source>
</evidence>
<evidence type="ECO:0000269" key="10">
    <source>
    </source>
</evidence>
<evidence type="ECO:0000269" key="11">
    <source>
    </source>
</evidence>
<evidence type="ECO:0000269" key="12">
    <source>
    </source>
</evidence>
<evidence type="ECO:0000269" key="13">
    <source>
    </source>
</evidence>
<evidence type="ECO:0000269" key="14">
    <source>
    </source>
</evidence>
<evidence type="ECO:0000269" key="15">
    <source>
    </source>
</evidence>
<evidence type="ECO:0000269" key="16">
    <source>
    </source>
</evidence>
<evidence type="ECO:0000269" key="17">
    <source>
    </source>
</evidence>
<evidence type="ECO:0000269" key="18">
    <source>
    </source>
</evidence>
<evidence type="ECO:0000269" key="19">
    <source>
    </source>
</evidence>
<evidence type="ECO:0000269" key="20">
    <source>
    </source>
</evidence>
<evidence type="ECO:0000269" key="21">
    <source>
    </source>
</evidence>
<evidence type="ECO:0000269" key="22">
    <source>
    </source>
</evidence>
<evidence type="ECO:0000269" key="23">
    <source>
    </source>
</evidence>
<evidence type="ECO:0000269" key="24">
    <source>
    </source>
</evidence>
<evidence type="ECO:0000269" key="25">
    <source>
    </source>
</evidence>
<evidence type="ECO:0000269" key="26">
    <source>
    </source>
</evidence>
<evidence type="ECO:0000269" key="27">
    <source>
    </source>
</evidence>
<evidence type="ECO:0000269" key="28">
    <source>
    </source>
</evidence>
<evidence type="ECO:0000269" key="29">
    <source>
    </source>
</evidence>
<evidence type="ECO:0000269" key="30">
    <source>
    </source>
</evidence>
<evidence type="ECO:0000269" key="31">
    <source>
    </source>
</evidence>
<evidence type="ECO:0000269" key="32">
    <source>
    </source>
</evidence>
<evidence type="ECO:0000269" key="33">
    <source>
    </source>
</evidence>
<evidence type="ECO:0000269" key="34">
    <source>
    </source>
</evidence>
<evidence type="ECO:0000269" key="35">
    <source>
    </source>
</evidence>
<evidence type="ECO:0000269" key="36">
    <source>
    </source>
</evidence>
<evidence type="ECO:0000269" key="37">
    <source>
    </source>
</evidence>
<evidence type="ECO:0000269" key="38">
    <source>
    </source>
</evidence>
<evidence type="ECO:0000269" key="39">
    <source>
    </source>
</evidence>
<evidence type="ECO:0000269" key="40">
    <source>
    </source>
</evidence>
<evidence type="ECO:0000303" key="41">
    <source>
    </source>
</evidence>
<evidence type="ECO:0000303" key="42">
    <source>
    </source>
</evidence>
<evidence type="ECO:0000303" key="43">
    <source>
    </source>
</evidence>
<evidence type="ECO:0000303" key="44">
    <source>
    </source>
</evidence>
<evidence type="ECO:0000303" key="45">
    <source>
    </source>
</evidence>
<evidence type="ECO:0000305" key="46"/>
<evidence type="ECO:0000305" key="47">
    <source>
    </source>
</evidence>
<evidence type="ECO:0000312" key="48">
    <source>
        <dbReference type="HGNC" id="HGNC:30287"/>
    </source>
</evidence>
<evidence type="ECO:0007744" key="49">
    <source>
        <dbReference type="PDB" id="5H64"/>
    </source>
</evidence>
<evidence type="ECO:0007744" key="50">
    <source>
        <dbReference type="PDB" id="6BCU"/>
    </source>
</evidence>
<evidence type="ECO:0007744" key="51">
    <source>
        <dbReference type="PDB" id="6BCX"/>
    </source>
</evidence>
<evidence type="ECO:0007744" key="52">
    <source>
        <dbReference type="PDB" id="6SB0"/>
    </source>
</evidence>
<evidence type="ECO:0007744" key="53">
    <source>
        <dbReference type="PDB" id="6SB2"/>
    </source>
</evidence>
<evidence type="ECO:0007744" key="54">
    <source>
        <dbReference type="PDB" id="6U62"/>
    </source>
</evidence>
<evidence type="ECO:0007744" key="55">
    <source>
        <dbReference type="PDB" id="7OWG"/>
    </source>
</evidence>
<evidence type="ECO:0007744" key="56">
    <source>
        <dbReference type="PDB" id="7PEA"/>
    </source>
</evidence>
<evidence type="ECO:0007744" key="57">
    <source>
        <dbReference type="PDB" id="7PEB"/>
    </source>
</evidence>
<evidence type="ECO:0007744" key="58">
    <source>
        <dbReference type="PDB" id="7PEC"/>
    </source>
</evidence>
<evidence type="ECO:0007744" key="59">
    <source>
        <dbReference type="PDB" id="7UX2"/>
    </source>
</evidence>
<evidence type="ECO:0007744" key="60">
    <source>
        <dbReference type="PDB" id="7UXC"/>
    </source>
</evidence>
<evidence type="ECO:0007744" key="61">
    <source>
        <dbReference type="PDB" id="7UXH"/>
    </source>
</evidence>
<evidence type="ECO:0007744" key="62">
    <source>
    </source>
</evidence>
<evidence type="ECO:0007744" key="63">
    <source>
    </source>
</evidence>
<evidence type="ECO:0007744" key="64">
    <source>
    </source>
</evidence>
<evidence type="ECO:0007744" key="65">
    <source>
    </source>
</evidence>
<evidence type="ECO:0007744" key="66">
    <source>
    </source>
</evidence>
<evidence type="ECO:0007744" key="67">
    <source>
    </source>
</evidence>
<evidence type="ECO:0007744" key="68">
    <source>
    </source>
</evidence>
<evidence type="ECO:0007744" key="69">
    <source>
    </source>
</evidence>
<evidence type="ECO:0007744" key="70">
    <source>
    </source>
</evidence>
<evidence type="ECO:0007829" key="71">
    <source>
        <dbReference type="PDB" id="6U62"/>
    </source>
</evidence>
<evidence type="ECO:0007829" key="72">
    <source>
        <dbReference type="PDB" id="7UX2"/>
    </source>
</evidence>
<evidence type="ECO:0007829" key="73">
    <source>
        <dbReference type="PDB" id="7UXC"/>
    </source>
</evidence>
<evidence type="ECO:0007829" key="74">
    <source>
        <dbReference type="PDB" id="8ERA"/>
    </source>
</evidence>
<evidence type="ECO:0007829" key="75">
    <source>
        <dbReference type="PDB" id="9F42"/>
    </source>
</evidence>
<accession>Q8N122</accession>
<accession>B2RN36</accession>
<accession>C6KEF2</accession>
<accession>F5H7J5</accession>
<accession>Q8N4V9</accession>
<accession>Q8TB32</accession>
<accession>Q9P2P3</accession>
<reference key="1">
    <citation type="journal article" date="2002" name="Cell">
        <title>mTOR interacts with raptor to form a nutrient-sensitive complex that signals to the growth machinery.</title>
        <authorList>
            <person name="Kim D.-H."/>
            <person name="Sarbassov D.D."/>
            <person name="Ali S.M."/>
            <person name="King J.E."/>
            <person name="Latek R.R."/>
            <person name="Erdjument-Bromage H."/>
            <person name="Tempst P."/>
            <person name="Sabatini D.M."/>
        </authorList>
    </citation>
    <scope>NUCLEOTIDE SEQUENCE [MRNA]</scope>
    <scope>FUNCTION</scope>
    <scope>TISSUE SPECIFICITY</scope>
    <scope>INTERACTION WITH EIF4EBP1 AND RPS6KB1</scope>
</reference>
<reference key="2">
    <citation type="journal article" date="2002" name="Cell">
        <title>Raptor, a binding partner of target of rapamycin (TOR), mediates TOR action.</title>
        <authorList>
            <person name="Hara K."/>
            <person name="Maruki Y."/>
            <person name="Long X."/>
            <person name="Yoshino K."/>
            <person name="Oshiro N."/>
            <person name="Hidayat S."/>
            <person name="Tokunaga C."/>
            <person name="Avruch J."/>
            <person name="Yonezawa K."/>
        </authorList>
    </citation>
    <scope>NUCLEOTIDE SEQUENCE [MRNA]</scope>
    <scope>FUNCTION</scope>
    <scope>INTERACTION WITH EIF4EBP1 AND RPS6KB1</scope>
</reference>
<reference key="3">
    <citation type="journal article" date="2006" name="Nature">
        <title>DNA sequence of human chromosome 17 and analysis of rearrangement in the human lineage.</title>
        <authorList>
            <person name="Zody M.C."/>
            <person name="Garber M."/>
            <person name="Adams D.J."/>
            <person name="Sharpe T."/>
            <person name="Harrow J."/>
            <person name="Lupski J.R."/>
            <person name="Nicholson C."/>
            <person name="Searle S.M."/>
            <person name="Wilming L."/>
            <person name="Young S.K."/>
            <person name="Abouelleil A."/>
            <person name="Allen N.R."/>
            <person name="Bi W."/>
            <person name="Bloom T."/>
            <person name="Borowsky M.L."/>
            <person name="Bugalter B.E."/>
            <person name="Butler J."/>
            <person name="Chang J.L."/>
            <person name="Chen C.-K."/>
            <person name="Cook A."/>
            <person name="Corum B."/>
            <person name="Cuomo C.A."/>
            <person name="de Jong P.J."/>
            <person name="DeCaprio D."/>
            <person name="Dewar K."/>
            <person name="FitzGerald M."/>
            <person name="Gilbert J."/>
            <person name="Gibson R."/>
            <person name="Gnerre S."/>
            <person name="Goldstein S."/>
            <person name="Grafham D.V."/>
            <person name="Grocock R."/>
            <person name="Hafez N."/>
            <person name="Hagopian D.S."/>
            <person name="Hart E."/>
            <person name="Norman C.H."/>
            <person name="Humphray S."/>
            <person name="Jaffe D.B."/>
            <person name="Jones M."/>
            <person name="Kamal M."/>
            <person name="Khodiyar V.K."/>
            <person name="LaButti K."/>
            <person name="Laird G."/>
            <person name="Lehoczky J."/>
            <person name="Liu X."/>
            <person name="Lokyitsang T."/>
            <person name="Loveland J."/>
            <person name="Lui A."/>
            <person name="Macdonald P."/>
            <person name="Major J.E."/>
            <person name="Matthews L."/>
            <person name="Mauceli E."/>
            <person name="McCarroll S.A."/>
            <person name="Mihalev A.H."/>
            <person name="Mudge J."/>
            <person name="Nguyen C."/>
            <person name="Nicol R."/>
            <person name="O'Leary S.B."/>
            <person name="Osoegawa K."/>
            <person name="Schwartz D.C."/>
            <person name="Shaw-Smith C."/>
            <person name="Stankiewicz P."/>
            <person name="Steward C."/>
            <person name="Swarbreck D."/>
            <person name="Venkataraman V."/>
            <person name="Whittaker C.A."/>
            <person name="Yang X."/>
            <person name="Zimmer A.R."/>
            <person name="Bradley A."/>
            <person name="Hubbard T."/>
            <person name="Birren B.W."/>
            <person name="Rogers J."/>
            <person name="Lander E.S."/>
            <person name="Nusbaum C."/>
        </authorList>
    </citation>
    <scope>NUCLEOTIDE SEQUENCE [LARGE SCALE GENOMIC DNA]</scope>
</reference>
<reference key="4">
    <citation type="submission" date="2005-07" db="EMBL/GenBank/DDBJ databases">
        <authorList>
            <person name="Mural R.J."/>
            <person name="Istrail S."/>
            <person name="Sutton G.G."/>
            <person name="Florea L."/>
            <person name="Halpern A.L."/>
            <person name="Mobarry C.M."/>
            <person name="Lippert R."/>
            <person name="Walenz B."/>
            <person name="Shatkay H."/>
            <person name="Dew I."/>
            <person name="Miller J.R."/>
            <person name="Flanigan M.J."/>
            <person name="Edwards N.J."/>
            <person name="Bolanos R."/>
            <person name="Fasulo D."/>
            <person name="Halldorsson B.V."/>
            <person name="Hannenhalli S."/>
            <person name="Turner R."/>
            <person name="Yooseph S."/>
            <person name="Lu F."/>
            <person name="Nusskern D.R."/>
            <person name="Shue B.C."/>
            <person name="Zheng X.H."/>
            <person name="Zhong F."/>
            <person name="Delcher A.L."/>
            <person name="Huson D.H."/>
            <person name="Kravitz S.A."/>
            <person name="Mouchard L."/>
            <person name="Reinert K."/>
            <person name="Remington K.A."/>
            <person name="Clark A.G."/>
            <person name="Waterman M.S."/>
            <person name="Eichler E.E."/>
            <person name="Adams M.D."/>
            <person name="Hunkapiller M.W."/>
            <person name="Myers E.W."/>
            <person name="Venter J.C."/>
        </authorList>
    </citation>
    <scope>NUCLEOTIDE SEQUENCE [LARGE SCALE GENOMIC DNA]</scope>
</reference>
<reference key="5">
    <citation type="journal article" date="2004" name="Genome Res.">
        <title>The status, quality, and expansion of the NIH full-length cDNA project: the Mammalian Gene Collection (MGC).</title>
        <authorList>
            <consortium name="The MGC Project Team"/>
        </authorList>
    </citation>
    <scope>NUCLEOTIDE SEQUENCE [LARGE SCALE MRNA] (ISOFORM 2)</scope>
    <scope>NUCLEOTIDE SEQUENCE [LARGE SCALE MRNA] OF 995-1135 (ISOFORM 1)</scope>
    <source>
        <tissue>Brain</tissue>
        <tissue>Placenta</tissue>
        <tissue>Testis</tissue>
    </source>
</reference>
<reference key="6">
    <citation type="journal article" date="2000" name="DNA Res.">
        <title>Prediction of the coding sequences of unidentified human genes. XVI. The complete sequences of 150 new cDNA clones from brain which code for large proteins in vitro.</title>
        <authorList>
            <person name="Nagase T."/>
            <person name="Kikuno R."/>
            <person name="Ishikawa K."/>
            <person name="Hirosawa M."/>
            <person name="Ohara O."/>
        </authorList>
    </citation>
    <scope>NUCLEOTIDE SEQUENCE [LARGE SCALE MRNA] OF 217-1335</scope>
    <source>
        <tissue>Brain</tissue>
    </source>
</reference>
<reference key="7">
    <citation type="journal article" date="2009" name="Mutat. Res.">
        <title>Characterization of a novel splicing variant in the RAPTOR gene.</title>
        <authorList>
            <person name="Sun C."/>
            <person name="Southard C."/>
            <person name="Di Rienzo A."/>
        </authorList>
    </citation>
    <scope>NUCLEOTIDE SEQUENCE [MRNA] OF 488-594 (ISOFORM 3)</scope>
    <scope>TISSUE SPECIFICITY (ISOFORM 3)</scope>
</reference>
<reference key="8">
    <citation type="journal article" date="2002" name="Mol. Cell">
        <title>Two TOR complexes, only one of which is rapamycin sensitive, have distinct roles in cell growth control.</title>
        <authorList>
            <person name="Loewith R."/>
            <person name="Jacinto E."/>
            <person name="Wullschleger S."/>
            <person name="Lorberg A."/>
            <person name="Crespo J.L."/>
            <person name="Bonenfant D."/>
            <person name="Oppliger W."/>
            <person name="Jenoe P."/>
            <person name="Hall M.N."/>
        </authorList>
    </citation>
    <scope>INTERACTION WITH MTOR AND MLST8</scope>
    <scope>IDENTIFICATION IN THE TORC1 COMPLEX</scope>
    <scope>TISSUE SPECIFICITY</scope>
</reference>
<reference key="9">
    <citation type="journal article" date="2003" name="Curr. Biol.">
        <title>TOS motif-mediated raptor binding regulates 4E-BP1 multisite phosphorylation and function.</title>
        <authorList>
            <person name="Schalm S.S."/>
            <person name="Fingar D.C."/>
            <person name="Sabatini D.M."/>
            <person name="Blenis J."/>
        </authorList>
    </citation>
    <scope>FUNCTION</scope>
    <scope>INTERACTION WITH EIF4EBP1</scope>
</reference>
<reference key="10">
    <citation type="journal article" date="2004" name="Genes Cells">
        <title>Dissociation of raptor from mTOR is a mechanism of rapamycin-induced inhibition of mTOR function.</title>
        <authorList>
            <person name="Oshiro N."/>
            <person name="Yoshino K."/>
            <person name="Hidayat S."/>
            <person name="Tokunaga C."/>
            <person name="Hara K."/>
            <person name="Eguchi S."/>
            <person name="Avruch J."/>
            <person name="Yonezawa K."/>
        </authorList>
    </citation>
    <scope>DISSOCIATION OF COMPLEX BY RAPAMYCIN</scope>
</reference>
<reference key="11">
    <citation type="journal article" date="2006" name="Cell">
        <title>Global, in vivo, and site-specific phosphorylation dynamics in signaling networks.</title>
        <authorList>
            <person name="Olsen J.V."/>
            <person name="Blagoev B."/>
            <person name="Gnad F."/>
            <person name="Macek B."/>
            <person name="Kumar C."/>
            <person name="Mortensen P."/>
            <person name="Mann M."/>
        </authorList>
    </citation>
    <scope>IDENTIFICATION BY MASS SPECTROMETRY [LARGE SCALE ANALYSIS]</scope>
    <source>
        <tissue>Cervix carcinoma</tissue>
    </source>
</reference>
<reference key="12">
    <citation type="journal article" date="2006" name="Nat. Biotechnol.">
        <title>A probability-based approach for high-throughput protein phosphorylation analysis and site localization.</title>
        <authorList>
            <person name="Beausoleil S.A."/>
            <person name="Villen J."/>
            <person name="Gerber S.A."/>
            <person name="Rush J."/>
            <person name="Gygi S.P."/>
        </authorList>
    </citation>
    <scope>PHOSPHORYLATION [LARGE SCALE ANALYSIS] AT SER-863</scope>
    <scope>IDENTIFICATION BY MASS SPECTROMETRY [LARGE SCALE ANALYSIS]</scope>
    <source>
        <tissue>Cervix carcinoma</tissue>
    </source>
</reference>
<reference key="13">
    <citation type="journal article" date="2007" name="Mol. Cell">
        <title>PRAS40 is an insulin-regulated inhibitor of the mTORC1 protein kinase.</title>
        <authorList>
            <person name="Sancak Y."/>
            <person name="Thoreen C.C."/>
            <person name="Peterson T.R."/>
            <person name="Lindquist R.A."/>
            <person name="Kang S.A."/>
            <person name="Spooner E."/>
            <person name="Carr S.A."/>
            <person name="Sabatini D.M."/>
        </authorList>
    </citation>
    <scope>INTERACTION WITH AKT1S1</scope>
</reference>
<reference key="14">
    <citation type="journal article" date="2008" name="Curr. Biol.">
        <title>Oncogenic MAPK signaling stimulates mTORC1 activity by promoting RSK-mediated raptor phosphorylation.</title>
        <authorList>
            <person name="Carriere A."/>
            <person name="Cargnello M."/>
            <person name="Julien L.A."/>
            <person name="Gao H."/>
            <person name="Bonneil E."/>
            <person name="Thibault P."/>
            <person name="Roux P.P."/>
        </authorList>
    </citation>
    <scope>PHOSPHORYLATION AT SER-719; SER-721 AND SER-722</scope>
</reference>
<reference key="15">
    <citation type="journal article" date="2008" name="J. Proteome Res.">
        <title>Combining protein-based IMAC, peptide-based IMAC, and MudPIT for efficient phosphoproteomic analysis.</title>
        <authorList>
            <person name="Cantin G.T."/>
            <person name="Yi W."/>
            <person name="Lu B."/>
            <person name="Park S.K."/>
            <person name="Xu T."/>
            <person name="Lee J.-D."/>
            <person name="Yates J.R. III"/>
        </authorList>
    </citation>
    <scope>IDENTIFICATION BY MASS SPECTROMETRY [LARGE SCALE ANALYSIS]</scope>
    <source>
        <tissue>Cervix carcinoma</tissue>
    </source>
</reference>
<reference key="16">
    <citation type="journal article" date="2008" name="Mol. Cell">
        <title>AMPK phosphorylation of raptor mediates a metabolic checkpoint.</title>
        <authorList>
            <person name="Gwinn D.M."/>
            <person name="Shackelford D.B."/>
            <person name="Egan D.F."/>
            <person name="Mihaylova M.M."/>
            <person name="Mery A."/>
            <person name="Vasquez D.S."/>
            <person name="Turk B.E."/>
            <person name="Shaw R.J."/>
        </authorList>
    </citation>
    <scope>PHOSPHORYLATION AT SER-722 AND SER-792</scope>
    <scope>MUTAGENESIS OF SER-722 AND SER-792</scope>
    <scope>INTERACTION WITH 14-3-3</scope>
</reference>
<reference key="17">
    <citation type="journal article" date="2008" name="Mol. Cell">
        <title>Kinase-selective enrichment enables quantitative phosphoproteomics of the kinome across the cell cycle.</title>
        <authorList>
            <person name="Daub H."/>
            <person name="Olsen J.V."/>
            <person name="Bairlein M."/>
            <person name="Gnad F."/>
            <person name="Oppermann F.S."/>
            <person name="Korner R."/>
            <person name="Greff Z."/>
            <person name="Keri G."/>
            <person name="Stemmann O."/>
            <person name="Mann M."/>
        </authorList>
    </citation>
    <scope>PHOSPHORYLATION [LARGE SCALE ANALYSIS] AT SER-877</scope>
    <scope>IDENTIFICATION BY MASS SPECTROMETRY [LARGE SCALE ANALYSIS]</scope>
    <source>
        <tissue>Cervix carcinoma</tissue>
    </source>
</reference>
<reference key="18">
    <citation type="journal article" date="2008" name="Proc. Natl. Acad. Sci. U.S.A.">
        <title>A quantitative atlas of mitotic phosphorylation.</title>
        <authorList>
            <person name="Dephoure N."/>
            <person name="Zhou C."/>
            <person name="Villen J."/>
            <person name="Beausoleil S.A."/>
            <person name="Bakalarski C.E."/>
            <person name="Elledge S.J."/>
            <person name="Gygi S.P."/>
        </authorList>
    </citation>
    <scope>PHOSPHORYLATION [LARGE SCALE ANALYSIS] AT SER-719; SER-859; SER-863 AND SER-877</scope>
    <scope>IDENTIFICATION BY MASS SPECTROMETRY [LARGE SCALE ANALYSIS]</scope>
    <source>
        <tissue>Cervix carcinoma</tissue>
    </source>
</reference>
<reference key="19">
    <citation type="journal article" date="2009" name="Anal. Chem.">
        <title>Lys-N and trypsin cover complementary parts of the phosphoproteome in a refined SCX-based approach.</title>
        <authorList>
            <person name="Gauci S."/>
            <person name="Helbig A.O."/>
            <person name="Slijper M."/>
            <person name="Krijgsveld J."/>
            <person name="Heck A.J."/>
            <person name="Mohammed S."/>
        </authorList>
    </citation>
    <scope>IDENTIFICATION BY MASS SPECTROMETRY [LARGE SCALE ANALYSIS]</scope>
</reference>
<reference key="20">
    <citation type="journal article" date="2009" name="Mol. Biol. Cell">
        <title>Nutrient-dependent mTORC1 association with the ULK1-Atg13-FIP200 complex required for autophagy.</title>
        <authorList>
            <person name="Hosokawa N."/>
            <person name="Hara T."/>
            <person name="Kaizuka T."/>
            <person name="Kishi C."/>
            <person name="Takamura A."/>
            <person name="Miura Y."/>
            <person name="Iemura S."/>
            <person name="Natsume T."/>
            <person name="Takehana K."/>
            <person name="Yamada N."/>
            <person name="Guan J.L."/>
            <person name="Oshiro N."/>
            <person name="Mizushima N."/>
        </authorList>
    </citation>
    <scope>INTERACTION WITH ULK1</scope>
</reference>
<reference key="21">
    <citation type="journal article" date="2009" name="Mol. Cell. Proteomics">
        <title>Large-scale proteomics analysis of the human kinome.</title>
        <authorList>
            <person name="Oppermann F.S."/>
            <person name="Gnad F."/>
            <person name="Olsen J.V."/>
            <person name="Hornberger R."/>
            <person name="Greff Z."/>
            <person name="Keri G."/>
            <person name="Mann M."/>
            <person name="Daub H."/>
        </authorList>
    </citation>
    <scope>PHOSPHORYLATION [LARGE SCALE ANALYSIS] AT SER-877</scope>
    <scope>IDENTIFICATION BY MASS SPECTROMETRY [LARGE SCALE ANALYSIS]</scope>
</reference>
<reference key="22">
    <citation type="journal article" date="2009" name="Sci. Signal.">
        <title>Quantitative phosphoproteomic analysis of T cell receptor signaling reveals system-wide modulation of protein-protein interactions.</title>
        <authorList>
            <person name="Mayya V."/>
            <person name="Lundgren D.H."/>
            <person name="Hwang S.-I."/>
            <person name="Rezaul K."/>
            <person name="Wu L."/>
            <person name="Eng J.K."/>
            <person name="Rodionov V."/>
            <person name="Han D.K."/>
        </authorList>
    </citation>
    <scope>PHOSPHORYLATION [LARGE SCALE ANALYSIS] AT SER-859; SER-863 AND SER-877</scope>
    <scope>IDENTIFICATION BY MASS SPECTROMETRY [LARGE SCALE ANALYSIS]</scope>
    <source>
        <tissue>Leukemic T-cell</tissue>
    </source>
</reference>
<reference key="23">
    <citation type="journal article" date="2010" name="Cell">
        <title>Ragulator-Rag complex targets mTORC1 to the lysosomal surface and is necessary for its activation by amino acids.</title>
        <authorList>
            <person name="Sancak Y."/>
            <person name="Bar-Peled L."/>
            <person name="Zoncu R."/>
            <person name="Markhard A.L."/>
            <person name="Nada S."/>
            <person name="Sabatini D.M."/>
        </authorList>
    </citation>
    <scope>SUBCELLULAR LOCATION</scope>
</reference>
<reference key="24">
    <citation type="journal article" date="2010" name="J. Biol. Chem.">
        <title>Regulation of mTOR complex 1 (mTORC1) by raptor Ser863 and multisite phosphorylation.</title>
        <authorList>
            <person name="Foster K.G."/>
            <person name="Acosta-Jaquez H.A."/>
            <person name="Romeo Y."/>
            <person name="Ekim B."/>
            <person name="Soliman G.A."/>
            <person name="Carriere A."/>
            <person name="Roux P.P."/>
            <person name="Ballif B.A."/>
            <person name="Fingar D.C."/>
        </authorList>
    </citation>
    <scope>PHOSPHORYLATION AT SER-696; THR-706; SER-855; SER-859; SER-863 AND SER-877</scope>
</reference>
<reference key="25">
    <citation type="journal article" date="2010" name="Sci. Signal.">
        <title>Quantitative phosphoproteomics reveals widespread full phosphorylation site occupancy during mitosis.</title>
        <authorList>
            <person name="Olsen J.V."/>
            <person name="Vermeulen M."/>
            <person name="Santamaria A."/>
            <person name="Kumar C."/>
            <person name="Miller M.L."/>
            <person name="Jensen L.J."/>
            <person name="Gnad F."/>
            <person name="Cox J."/>
            <person name="Jensen T.S."/>
            <person name="Nigg E.A."/>
            <person name="Brunak S."/>
            <person name="Mann M."/>
        </authorList>
    </citation>
    <scope>PHOSPHORYLATION [LARGE SCALE ANALYSIS] AT SER-859; SER-863 AND SER-877</scope>
    <scope>IDENTIFICATION BY MASS SPECTROMETRY [LARGE SCALE ANALYSIS]</scope>
    <source>
        <tissue>Cervix carcinoma</tissue>
    </source>
</reference>
<reference key="26">
    <citation type="journal article" date="2011" name="BMC Syst. Biol.">
        <title>Initial characterization of the human central proteome.</title>
        <authorList>
            <person name="Burkard T.R."/>
            <person name="Planyavsky M."/>
            <person name="Kaupe I."/>
            <person name="Breitwieser F.P."/>
            <person name="Buerckstuemmer T."/>
            <person name="Bennett K.L."/>
            <person name="Superti-Furga G."/>
            <person name="Colinge J."/>
        </authorList>
    </citation>
    <scope>IDENTIFICATION BY MASS SPECTROMETRY [LARGE SCALE ANALYSIS]</scope>
</reference>
<reference key="27">
    <citation type="journal article" date="2011" name="Sci. Signal.">
        <title>System-wide temporal characterization of the proteome and phosphoproteome of human embryonic stem cell differentiation.</title>
        <authorList>
            <person name="Rigbolt K.T."/>
            <person name="Prokhorova T.A."/>
            <person name="Akimov V."/>
            <person name="Henningsen J."/>
            <person name="Johansen P.T."/>
            <person name="Kratchmarova I."/>
            <person name="Kassem M."/>
            <person name="Mann M."/>
            <person name="Olsen J.V."/>
            <person name="Blagoev B."/>
        </authorList>
    </citation>
    <scope>PHOSPHORYLATION [LARGE SCALE ANALYSIS] AT SER-863 AND SER-877</scope>
    <scope>IDENTIFICATION BY MASS SPECTROMETRY [LARGE SCALE ANALYSIS]</scope>
</reference>
<reference key="28">
    <citation type="journal article" date="2012" name="EMBO Mol. Med.">
        <title>5-HT(6) receptor recruitment of mTOR as a mechanism for perturbed cognition in schizophrenia.</title>
        <authorList>
            <person name="Meffre J."/>
            <person name="Chaumont-Dubel S."/>
            <person name="Mannoury la Cour C."/>
            <person name="Loiseau F."/>
            <person name="Watson D.J."/>
            <person name="Dekeyne A."/>
            <person name="Seveno M."/>
            <person name="Rivet J.M."/>
            <person name="Gaven F."/>
            <person name="Deleris P."/>
            <person name="Herve D."/>
            <person name="Fone K.C."/>
            <person name="Bockaert J."/>
            <person name="Millan M.J."/>
            <person name="Marin P."/>
        </authorList>
    </citation>
    <scope>INTERACTION WITH HTR6</scope>
</reference>
<reference key="29">
    <citation type="journal article" date="2012" name="J. Biol. Chem.">
        <title>Osmotic stress regulates mammalian target of rapamycin (mTOR) complex 1 via c-Jun N-terminal Kinase (JNK)-mediated Raptor protein phosphorylation.</title>
        <authorList>
            <person name="Kwak D."/>
            <person name="Choi S."/>
            <person name="Jeong H."/>
            <person name="Jang J.H."/>
            <person name="Lee Y."/>
            <person name="Jeon H."/>
            <person name="Lee M.N."/>
            <person name="Noh J."/>
            <person name="Cho K."/>
            <person name="Yoo J.S."/>
            <person name="Hwang D."/>
            <person name="Suh P.G."/>
            <person name="Ryu S.H."/>
        </authorList>
    </citation>
    <scope>PHOSPHORYLATION AT SER-696; THR-706 AND SER-863</scope>
</reference>
<reference key="30">
    <citation type="journal article" date="2013" name="Cell">
        <title>Inhibition of mTORC1 by astrin and stress granules prevents apoptosis in cancer cells.</title>
        <authorList>
            <person name="Thedieck K."/>
            <person name="Holzwarth B."/>
            <person name="Prentzell M.T."/>
            <person name="Boehlke C."/>
            <person name="Klasener K."/>
            <person name="Ruf S."/>
            <person name="Sonntag A.G."/>
            <person name="Maerz L."/>
            <person name="Grellscheid S.N."/>
            <person name="Kremmer E."/>
            <person name="Nitschke R."/>
            <person name="Kuehn E.W."/>
            <person name="Jonker J.W."/>
            <person name="Groen A.K."/>
            <person name="Reth M."/>
            <person name="Hall M.N."/>
            <person name="Baumeister R."/>
        </authorList>
    </citation>
    <scope>INTERACTION WITH G3BP1 AND SPAG5</scope>
    <scope>SUBCELLULAR LOCATION</scope>
</reference>
<reference key="31">
    <citation type="journal article" date="2013" name="FEBS Lett.">
        <title>PIH1D1 interacts with mTOR complex 1 and enhances ribosome RNA transcription.</title>
        <authorList>
            <person name="Kamano Y."/>
            <person name="Saeki M."/>
            <person name="Egusa H."/>
            <person name="Kakihara Y."/>
            <person name="Houry W.A."/>
            <person name="Yatani H."/>
            <person name="Kamisaki Y."/>
        </authorList>
    </citation>
    <scope>INTERACTION WITH PIH1D1</scope>
</reference>
<reference key="32">
    <citation type="journal article" date="2013" name="J. Cancer Biol. Res.">
        <title>The potential role of BRCA1-associated ATM activator-1 (BRAT1) in regulation of mTOR.</title>
        <authorList>
            <person name="So E.Y."/>
            <person name="Ouchi T."/>
        </authorList>
    </citation>
    <scope>INTERACTION WITH BRAT1</scope>
</reference>
<reference key="33">
    <citation type="journal article" date="2013" name="J. Proteome Res.">
        <title>Toward a comprehensive characterization of a human cancer cell phosphoproteome.</title>
        <authorList>
            <person name="Zhou H."/>
            <person name="Di Palma S."/>
            <person name="Preisinger C."/>
            <person name="Peng M."/>
            <person name="Polat A.N."/>
            <person name="Heck A.J."/>
            <person name="Mohammed S."/>
        </authorList>
    </citation>
    <scope>PHOSPHORYLATION [LARGE SCALE ANALYSIS] AT SER-696; SER-719; SER-722; SER-859; SER-863; THR-865 AND SER-877</scope>
    <scope>IDENTIFICATION BY MASS SPECTROMETRY [LARGE SCALE ANALYSIS]</scope>
    <source>
        <tissue>Cervix carcinoma</tissue>
        <tissue>Erythroleukemia</tissue>
    </source>
</reference>
<reference key="34">
    <citation type="journal article" date="2014" name="J. Biol. Chem.">
        <title>Characterization of the Raptor/4E-BP1 interaction by chemical cross-linking coupled with mass spectrometry analysis.</title>
        <authorList>
            <person name="Coffman K."/>
            <person name="Yang B."/>
            <person name="Lu J."/>
            <person name="Tetlow A.L."/>
            <person name="Pelliccio E."/>
            <person name="Lu S."/>
            <person name="Guo D.C."/>
            <person name="Tang C."/>
            <person name="Dong M.Q."/>
            <person name="Tamanoi F."/>
        </authorList>
    </citation>
    <scope>FUNCTION</scope>
    <scope>INTERACTION WITH EIF4EBP1</scope>
    <scope>IDENTIFICATION IN THE MTORC1 COMPLEX</scope>
</reference>
<reference key="35">
    <citation type="journal article" date="2014" name="J. Proteomics">
        <title>An enzyme assisted RP-RPLC approach for in-depth analysis of human liver phosphoproteome.</title>
        <authorList>
            <person name="Bian Y."/>
            <person name="Song C."/>
            <person name="Cheng K."/>
            <person name="Dong M."/>
            <person name="Wang F."/>
            <person name="Huang J."/>
            <person name="Sun D."/>
            <person name="Wang L."/>
            <person name="Ye M."/>
            <person name="Zou H."/>
        </authorList>
    </citation>
    <scope>PHOSPHORYLATION [LARGE SCALE ANALYSIS] AT SER-738 AND SER-877</scope>
    <scope>IDENTIFICATION BY MASS SPECTROMETRY [LARGE SCALE ANALYSIS]</scope>
    <source>
        <tissue>Liver</tissue>
    </source>
</reference>
<reference key="36">
    <citation type="journal article" date="2015" name="Genes Dev.">
        <title>NLK phosphorylates Raptor to mediate stress-induced mTORC1 inhibition.</title>
        <authorList>
            <person name="Yuan H.X."/>
            <person name="Wang Z."/>
            <person name="Yu F.X."/>
            <person name="Li F."/>
            <person name="Russell R.C."/>
            <person name="Jewell J.L."/>
            <person name="Guan K.L."/>
        </authorList>
    </citation>
    <scope>FUNCTION</scope>
    <scope>PHOSPHORYLATION AT SER-863 AND SER-877</scope>
    <scope>MUTAGENESIS OF SER-863</scope>
</reference>
<reference key="37">
    <citation type="journal article" date="2015" name="J. Biol. Chem.">
        <title>La-related protein 1 (LARP1) represses terminal oligopyrimidine (TOP) mRNA translation downstream of mTOR complex 1 (mTORC1).</title>
        <authorList>
            <person name="Fonseca B.D."/>
            <person name="Zakaria C."/>
            <person name="Jia J.J."/>
            <person name="Graber T.E."/>
            <person name="Svitkin Y."/>
            <person name="Tahmasebi S."/>
            <person name="Healy D."/>
            <person name="Hoang H.D."/>
            <person name="Jensen J.M."/>
            <person name="Diao I.T."/>
            <person name="Lussier A."/>
            <person name="Dajadian C."/>
            <person name="Padmanabhan N."/>
            <person name="Wang W."/>
            <person name="Matta-Camacho E."/>
            <person name="Hearnden J."/>
            <person name="Smith E.M."/>
            <person name="Tsukumo Y."/>
            <person name="Yanagiya A."/>
            <person name="Morita M."/>
            <person name="Petroulakis E."/>
            <person name="Gonzalez J.L."/>
            <person name="Hernandez G."/>
            <person name="Alain T."/>
            <person name="Damgaard C.K."/>
        </authorList>
    </citation>
    <scope>INTERACTION WITH LARP1 AND THE MTORC1 COMPLEX</scope>
    <scope>SUBCELLULAR LOCATION</scope>
</reference>
<reference key="38">
    <citation type="journal article" date="2016" name="Dev. Cell">
        <title>WAC regulates mTOR activity by acting as an adaptor for the TTT and Pontin/Reptin complexes.</title>
        <authorList>
            <person name="David-Morrison G."/>
            <person name="Xu Z."/>
            <person name="Rui Y.N."/>
            <person name="Charng W.L."/>
            <person name="Jaiswal M."/>
            <person name="Yamamoto S."/>
            <person name="Xiong B."/>
            <person name="Zhang K."/>
            <person name="Sandoval H."/>
            <person name="Duraine L."/>
            <person name="Zuo Z."/>
            <person name="Zhang S."/>
            <person name="Bellen H.J."/>
        </authorList>
    </citation>
    <scope>INTERACTION WITH WAC</scope>
</reference>
<reference key="39">
    <citation type="journal article" date="2018" name="Cell">
        <title>Poxviruses Evade Cytosolic Sensing through Disruption of an mTORC1-mTORC2 Regulatory Circuit.</title>
        <authorList>
            <person name="Meade N."/>
            <person name="Furey C."/>
            <person name="Li H."/>
            <person name="Verma R."/>
            <person name="Chai Q."/>
            <person name="Rollins M.G."/>
            <person name="DiGiuseppe S."/>
            <person name="Naghavi M.H."/>
            <person name="Walsh D."/>
        </authorList>
    </citation>
    <scope>INTERACTION WITH VACCINIA VIRUS PROTEIN F17</scope>
</reference>
<reference key="40">
    <citation type="journal article" date="2018" name="Sci. Transl. Med.">
        <title>The PTH/PTHrP-SIK3 pathway affects skeletogenesis through altered mTOR signaling.</title>
        <authorList>
            <person name="Csukasi F."/>
            <person name="Duran I."/>
            <person name="Barad M."/>
            <person name="Barta T."/>
            <person name="Gudernova I."/>
            <person name="Trantirek L."/>
            <person name="Martin J.H."/>
            <person name="Kuo C.Y."/>
            <person name="Woods J."/>
            <person name="Lee H."/>
            <person name="Cohn D.H."/>
            <person name="Krejci P."/>
            <person name="Krakow D."/>
        </authorList>
    </citation>
    <scope>INTERACTION WITH SIK3</scope>
</reference>
<reference key="41">
    <citation type="journal article" date="2019" name="Cell Metab.">
        <title>Leucine signals to mTORC1 via its metabolite acetyl-coenzyme A.</title>
        <authorList>
            <person name="Son S.M."/>
            <person name="Park S.J."/>
            <person name="Lee H."/>
            <person name="Siddiqi F."/>
            <person name="Lee J.E."/>
            <person name="Menzies F.M."/>
            <person name="Rubinsztein D.C."/>
        </authorList>
    </citation>
    <scope>ACETYLATION AT LYS-1097</scope>
    <scope>MUTAGENESIS OF LYS-1097</scope>
</reference>
<reference key="42">
    <citation type="journal article" date="2019" name="Elife">
        <title>GPCR signaling inhibits mTORC1 via PKA phosphorylation of Raptor.</title>
        <authorList>
            <person name="Jewell J.L."/>
            <person name="Fu V."/>
            <person name="Hong A.W."/>
            <person name="Yu F.X."/>
            <person name="Meng D."/>
            <person name="Melick C.H."/>
            <person name="Wang H."/>
            <person name="Lam W.M."/>
            <person name="Yuan H.X."/>
            <person name="Taylor S.S."/>
            <person name="Guan K.L."/>
        </authorList>
    </citation>
    <scope>PHOSPHORYLATION AT SER-791</scope>
    <scope>MUTAGENESIS OF SER-791 AND SER-792</scope>
</reference>
<reference key="43">
    <citation type="journal article" date="2019" name="Sci. Rep.">
        <title>TBK1 limits mTORC1 by promoting phosphorylation of Raptor Ser877.</title>
        <authorList>
            <person name="Antonia R.J."/>
            <person name="Castillo J."/>
            <person name="Herring L.E."/>
            <person name="Serafin D.S."/>
            <person name="Liu P."/>
            <person name="Graves L.M."/>
            <person name="Baldwin A.S."/>
            <person name="Hagan R.S."/>
        </authorList>
    </citation>
    <scope>PHOSPHORYLATION AT SER-44; SER-122; SER-696; THR-706; SER-836; SER-859; SER-863; SER-877 AND SER-982</scope>
    <scope>MUTAGENESIS OF SER-877</scope>
</reference>
<reference key="44">
    <citation type="journal article" date="2020" name="Nat. Commun.">
        <title>Leucine regulates autophagy via acetylation of the mTORC1 component raptor.</title>
        <authorList>
            <person name="Son S.M."/>
            <person name="Park S.J."/>
            <person name="Stamatakou E."/>
            <person name="Vicinanza M."/>
            <person name="Menzies F.M."/>
            <person name="Rubinsztein D.C."/>
        </authorList>
    </citation>
    <scope>FUNCTION</scope>
    <scope>ACETYLATION AT LYS-1097</scope>
</reference>
<reference key="45">
    <citation type="journal article" date="2021" name="Sci. Rep.">
        <title>VHL suppresses RAPTOR and inhibits mTORC1 signaling in clear cell renal cell carcinoma.</title>
        <authorList>
            <person name="Ganner A."/>
            <person name="Gehrke C."/>
            <person name="Klein M."/>
            <person name="Thegtmeier L."/>
            <person name="Matulenski T."/>
            <person name="Wingendorf L."/>
            <person name="Wang L."/>
            <person name="Pilz F."/>
            <person name="Greidl L."/>
            <person name="Meid L."/>
            <person name="Kotsis F."/>
            <person name="Walz G."/>
            <person name="Frew I.J."/>
            <person name="Neumann-Haefelin E."/>
        </authorList>
    </citation>
    <scope>UBIQUITINATION</scope>
</reference>
<reference key="46">
    <citation type="journal article" date="2022" name="Proc. Natl. Acad. Sci. U.S.A.">
        <title>SNAT7 regulates mTORC1 via macropinocytosis.</title>
        <authorList>
            <person name="Meng D."/>
            <person name="Yang Q."/>
            <person name="Jeong M.H."/>
            <person name="Curukovic A."/>
            <person name="Tiwary S."/>
            <person name="Melick C.H."/>
            <person name="Lama-Sherpa T.D."/>
            <person name="Wang H."/>
            <person name="Huerta-Rosario M."/>
            <person name="Urquhart G."/>
            <person name="Zacharias L.G."/>
            <person name="Lewis C."/>
            <person name="DeBerardinis R.J."/>
            <person name="Jewell J.L."/>
        </authorList>
    </citation>
    <scope>INTERACTION WITH SLC38A7</scope>
</reference>
<reference key="47">
    <citation type="journal article" date="2023" name="Cell Death Differ.">
        <title>Phosphorylation of OTUB1 at Tyr 26 stabilizes the mTORC1 component, Raptor.</title>
        <authorList>
            <person name="Seo S.U."/>
            <person name="Woo S.M."/>
            <person name="Kim M.W."/>
            <person name="Lee E.W."/>
            <person name="Min K.J."/>
            <person name="Kwon T.K."/>
        </authorList>
    </citation>
    <scope>UBIQUITINATION AT LYS-932 AND LYS-948</scope>
    <scope>DEUBIQUITINATION</scope>
    <scope>MUTAGENESIS OF LYS-737; LYS-894; LYS-932 AND LYS-948</scope>
</reference>
<reference key="48">
    <citation type="journal article" date="2023" name="Mol. Cell">
        <title>O-GlcNAcylation of Raptor transduces glucose signals to mTORC1.</title>
        <authorList>
            <person name="Xu C."/>
            <person name="Pan X."/>
            <person name="Wang D."/>
            <person name="Guan Y."/>
            <person name="Yang W."/>
            <person name="Chen X."/>
            <person name="Liu Y."/>
        </authorList>
    </citation>
    <scope>FUNCTION</scope>
    <scope>GLYCOSYLATION AT THR-700</scope>
    <scope>PHOSPHORYLATION AT SER-722 AND SER-792</scope>
    <scope>MUTAGENESIS OF THR-699; THR-700; SER-722 AND SER-792</scope>
</reference>
<reference evidence="49" key="49">
    <citation type="journal article" date="2016" name="Protein Cell">
        <title>4.4 Aa Resolution Cryo-EM structure of human mTOR Complex 1.</title>
        <authorList>
            <person name="Yang H."/>
            <person name="Wang J."/>
            <person name="Liu M."/>
            <person name="Chen X."/>
            <person name="Huang M."/>
            <person name="Tan D."/>
            <person name="Dong M.Q."/>
            <person name="Wong C.C."/>
            <person name="Wang J."/>
            <person name="Xu Y."/>
            <person name="Wang H.W."/>
        </authorList>
    </citation>
    <scope>STRUCTURE BY ELECTRON MICROSCOPY (4.40 ANGSTROMS) IN COMPLEX WITH MTOR AND MLST8</scope>
    <scope>IDENTIFICATION IN THE MTORC1 COMPLEX</scope>
</reference>
<reference evidence="50 51" key="50">
    <citation type="journal article" date="2017" name="Nature">
        <title>Mechanisms of mTORC1 activation by RHEB and inhibition by PRAS40.</title>
        <authorList>
            <person name="Yang H."/>
            <person name="Jiang X."/>
            <person name="Li B."/>
            <person name="Yang H.J."/>
            <person name="Miller M."/>
            <person name="Yang A."/>
            <person name="Dhar A."/>
            <person name="Pavletich N.P."/>
        </authorList>
    </citation>
    <scope>STRUCTURE BY ELECTRON MICROSCOPY (3.43 ANGSTROMS) IN COMPLEX WITH MLST8; MTOR; RHEB AND EIF4EBP1</scope>
    <scope>IDENTIFICATION IN THE MTORC1 COMPLEX</scope>
</reference>
<reference evidence="52 53" key="51">
    <citation type="journal article" date="2019" name="Science">
        <title>Architecture of human Rag GTPase heterodimers and their complex with mTORC1.</title>
        <authorList>
            <person name="Anandapadamanaban M."/>
            <person name="Masson G.R."/>
            <person name="Perisic O."/>
            <person name="Berndt A."/>
            <person name="Kaufman J."/>
            <person name="Johnson C.M."/>
            <person name="Santhanam B."/>
            <person name="Rogala K.B."/>
            <person name="Sabatini D.M."/>
            <person name="Williams R.L."/>
        </authorList>
    </citation>
    <scope>STRUCTURE BY ELECTRON MICROSCOPY (5.50 ANGSTROMS) IN COMPLEX WITH RRAGA; RRAGC; MLST8; MTOR AND AKT1S1</scope>
    <scope>IDENTIFICATION IN THE MTORC1 COMPLEX</scope>
    <scope>SUBCELLULAR LOCATION</scope>
</reference>
<reference evidence="54" key="52">
    <citation type="journal article" date="2019" name="Science">
        <title>Structural basis for the docking of mTORC1 on the lysosomal surface.</title>
        <authorList>
            <person name="Rogala K.B."/>
            <person name="Gu X."/>
            <person name="Kedir J.F."/>
            <person name="Abu-Remaileh M."/>
            <person name="Bianchi L.F."/>
            <person name="Bottino A.M.S."/>
            <person name="Dueholm R."/>
            <person name="Niehaus A."/>
            <person name="Overwijn D."/>
            <person name="Fils A.P."/>
            <person name="Zhou S.X."/>
            <person name="Leary D."/>
            <person name="Laqtom N.N."/>
            <person name="Brignole E.J."/>
            <person name="Sabatini D.M."/>
        </authorList>
    </citation>
    <scope>STRUCTURE BY ELECTRON MICROSCOPY (3.18 ANGSTROMS) IN COMPLEX WITH RRAGA; RRAGC; LAMTOR1; LAMTOR2; LAMTOR3; LAMTOR4 AND LAMTOR5</scope>
    <scope>SUBCELLULAR LOCATION</scope>
    <scope>IDENTIFICATION IN THE MTORC1 COMPLEX</scope>
    <scope>MUTAGENESIS OF 557-ASN--GLU-564; ALA-560; 594-CYS--ASP-598; ARG-597; 634-THR--HIS-636; ASP-635; 916-TYR--GLN-936; 919-HIS--HIS-921; 925-ARG--LYS-928 AND 933-GLY--GLU-935</scope>
</reference>
<reference evidence="55" key="53">
    <citation type="journal article" date="2021" name="Elife">
        <title>Bipartite binding and partial inhibition links DEPTOR and mTOR in a mutually antagonistic embrace.</title>
        <authorList>
            <person name="Heimhalt M."/>
            <person name="Berndt A."/>
            <person name="Wagstaff J."/>
            <person name="Anandapadamanaban M."/>
            <person name="Perisic O."/>
            <person name="Maslen S."/>
            <person name="McLaughlin S."/>
            <person name="Yu C.W."/>
            <person name="Masson G.R."/>
            <person name="Boland A."/>
            <person name="Ni X."/>
            <person name="Yamashita K."/>
            <person name="Murshudov G.N."/>
            <person name="Skehel M."/>
            <person name="Freund S.M."/>
            <person name="Williams R.L."/>
        </authorList>
    </citation>
    <scope>STRUCTURE BY ELECTRON MICROSCOPY (4.70 ANGSTROMS)</scope>
    <scope>STRUCTURE BY ELECTRON MICROSCOPY (4.40 ANGSTROMS) IN COMPLEX WITH DEPTOR; MTOR AND MLST8</scope>
    <scope>IDENTIFICATION IN THE MTORC1 COMPLEX</scope>
</reference>
<reference evidence="56 57 58" key="54">
    <citation type="journal article" date="2021" name="Elife">
        <title>Regulation of human mTOR complexes by DEPTOR.</title>
        <authorList>
            <person name="Waelchli M."/>
            <person name="Berneiser K."/>
            <person name="Mangia F."/>
            <person name="Imseng S."/>
            <person name="Craigie L.M."/>
            <person name="Stuttfeld E."/>
            <person name="Hall M.N."/>
            <person name="Maier T."/>
        </authorList>
    </citation>
    <scope>STRUCTURE BY ELECTRON MICROSCOPY (3.67 ANGSTROMS)</scope>
    <scope>STRUCTURE BY ELECTRON MICROSCOPY (4.40 ANGSTROMS) IN COMPLEX WITH DEPTOR; MTOR AND MLST8</scope>
    <scope>IDENTIFICATION IN THE MTORC1 COMPLEX</scope>
</reference>
<reference evidence="59 60 61" key="55">
    <citation type="journal article" date="2023" name="Nature">
        <title>Structure of the lysosomal mTORC1-TFEB-Rag-Ragulator megacomplex.</title>
        <authorList>
            <person name="Cui Z."/>
            <person name="Napolitano G."/>
            <person name="de Araujo M.E.G."/>
            <person name="Esposito A."/>
            <person name="Monfregola J."/>
            <person name="Huber L.A."/>
            <person name="Ballabio A."/>
            <person name="Hurley J.H."/>
        </authorList>
    </citation>
    <scope>STRUCTURE BY ELECTRON MICROSCOPY (2.90 ANGSTROMS) IN COMPLEX WITH RRAGA; RRAGC; LAMTOR1; LAMTOR2; LAMTOR3; LAMTOR4; MLST8; MTOR AND TFEB</scope>
    <scope>IDENTIFICATION IN THE MTORC1 COMPLEX</scope>
</reference>
<gene>
    <name evidence="48" type="primary">RPTOR</name>
    <name evidence="41" type="synonym">KIAA1303</name>
    <name evidence="42 43" type="synonym">RAPTOR</name>
</gene>
<proteinExistence type="evidence at protein level"/>
<dbReference type="EMBL" id="AY090663">
    <property type="protein sequence ID" value="AAM09075.1"/>
    <property type="molecule type" value="mRNA"/>
</dbReference>
<dbReference type="EMBL" id="AB082951">
    <property type="protein sequence ID" value="BAC06490.1"/>
    <property type="molecule type" value="mRNA"/>
</dbReference>
<dbReference type="EMBL" id="AC016245">
    <property type="status" value="NOT_ANNOTATED_CDS"/>
    <property type="molecule type" value="Genomic_DNA"/>
</dbReference>
<dbReference type="EMBL" id="AC109327">
    <property type="status" value="NOT_ANNOTATED_CDS"/>
    <property type="molecule type" value="Genomic_DNA"/>
</dbReference>
<dbReference type="EMBL" id="AC127496">
    <property type="status" value="NOT_ANNOTATED_CDS"/>
    <property type="molecule type" value="Genomic_DNA"/>
</dbReference>
<dbReference type="EMBL" id="AC133012">
    <property type="status" value="NOT_ANNOTATED_CDS"/>
    <property type="molecule type" value="Genomic_DNA"/>
</dbReference>
<dbReference type="EMBL" id="CH471099">
    <property type="protein sequence ID" value="EAW89618.1"/>
    <property type="molecule type" value="Genomic_DNA"/>
</dbReference>
<dbReference type="EMBL" id="BC025180">
    <property type="protein sequence ID" value="AAH25180.1"/>
    <property type="molecule type" value="mRNA"/>
</dbReference>
<dbReference type="EMBL" id="BC033258">
    <property type="protein sequence ID" value="AAH33258.1"/>
    <property type="molecule type" value="mRNA"/>
</dbReference>
<dbReference type="EMBL" id="BC064515">
    <property type="protein sequence ID" value="AAH64515.1"/>
    <property type="molecule type" value="mRNA"/>
</dbReference>
<dbReference type="EMBL" id="BC136652">
    <property type="protein sequence ID" value="AAI36653.1"/>
    <property type="molecule type" value="mRNA"/>
</dbReference>
<dbReference type="EMBL" id="BC136654">
    <property type="protein sequence ID" value="AAI36655.1"/>
    <property type="molecule type" value="mRNA"/>
</dbReference>
<dbReference type="EMBL" id="AB037724">
    <property type="protein sequence ID" value="BAA92541.1"/>
    <property type="molecule type" value="mRNA"/>
</dbReference>
<dbReference type="EMBL" id="GQ183898">
    <property type="protein sequence ID" value="ACS44766.1"/>
    <property type="molecule type" value="mRNA"/>
</dbReference>
<dbReference type="CCDS" id="CCDS11773.1">
    <molecule id="Q8N122-1"/>
</dbReference>
<dbReference type="CCDS" id="CCDS54175.1">
    <molecule id="Q8N122-3"/>
</dbReference>
<dbReference type="RefSeq" id="NP_001156506.1">
    <molecule id="Q8N122-3"/>
    <property type="nucleotide sequence ID" value="NM_001163034.2"/>
</dbReference>
<dbReference type="RefSeq" id="NP_065812.1">
    <molecule id="Q8N122-1"/>
    <property type="nucleotide sequence ID" value="NM_020761.3"/>
</dbReference>
<dbReference type="PDB" id="5H64">
    <property type="method" value="EM"/>
    <property type="resolution" value="4.40 A"/>
    <property type="chains" value="B/b=1-1335"/>
</dbReference>
<dbReference type="PDB" id="6BCU">
    <property type="method" value="EM"/>
    <property type="resolution" value="3.43 A"/>
    <property type="chains" value="W/Y=2-1335"/>
</dbReference>
<dbReference type="PDB" id="6BCX">
    <property type="method" value="EM"/>
    <property type="resolution" value="3.00 A"/>
    <property type="chains" value="W/Y=2-1335"/>
</dbReference>
<dbReference type="PDB" id="6SB0">
    <property type="method" value="EM"/>
    <property type="resolution" value="5.50 A"/>
    <property type="chains" value="N/Y=1-1335"/>
</dbReference>
<dbReference type="PDB" id="6SB2">
    <property type="method" value="EM"/>
    <property type="resolution" value="6.20 A"/>
    <property type="chains" value="N/Y=1-1335"/>
</dbReference>
<dbReference type="PDB" id="6U62">
    <property type="method" value="EM"/>
    <property type="resolution" value="3.18 A"/>
    <property type="chains" value="A=1-1335"/>
</dbReference>
<dbReference type="PDB" id="7OWG">
    <property type="method" value="EM"/>
    <property type="resolution" value="4.70 A"/>
    <property type="chains" value="Y=1-1335"/>
</dbReference>
<dbReference type="PDB" id="7PEA">
    <property type="method" value="EM"/>
    <property type="resolution" value="4.07 A"/>
    <property type="chains" value="E/F=1-1335"/>
</dbReference>
<dbReference type="PDB" id="7PEB">
    <property type="method" value="EM"/>
    <property type="resolution" value="3.67 A"/>
    <property type="chains" value="E=1-1335"/>
</dbReference>
<dbReference type="PDB" id="7PEC">
    <property type="method" value="EM"/>
    <property type="resolution" value="4.24 A"/>
    <property type="chains" value="E=1-1335"/>
</dbReference>
<dbReference type="PDB" id="7UX2">
    <property type="method" value="EM"/>
    <property type="resolution" value="2.90 A"/>
    <property type="chains" value="A=1-1335"/>
</dbReference>
<dbReference type="PDB" id="7UXC">
    <property type="method" value="EM"/>
    <property type="resolution" value="3.20 A"/>
    <property type="chains" value="C=1-1335"/>
</dbReference>
<dbReference type="PDB" id="7UXH">
    <property type="method" value="EM"/>
    <property type="resolution" value="3.20 A"/>
    <property type="chains" value="E/U=1-1335"/>
</dbReference>
<dbReference type="PDB" id="8ERA">
    <property type="method" value="EM"/>
    <property type="resolution" value="2.86 A"/>
    <property type="chains" value="Y=1-1335"/>
</dbReference>
<dbReference type="PDB" id="8RCH">
    <property type="method" value="EM"/>
    <property type="resolution" value="4.00 A"/>
    <property type="chains" value="W/Y=1-1335"/>
</dbReference>
<dbReference type="PDB" id="8RCK">
    <property type="method" value="EM"/>
    <property type="resolution" value="3.40 A"/>
    <property type="chains" value="Y=1-1335"/>
</dbReference>
<dbReference type="PDB" id="8RCN">
    <property type="method" value="EM"/>
    <property type="resolution" value="3.10 A"/>
    <property type="chains" value="Y=1-1335"/>
</dbReference>
<dbReference type="PDB" id="9F42">
    <property type="method" value="EM"/>
    <property type="resolution" value="3.27 A"/>
    <property type="chains" value="E=1-1335"/>
</dbReference>
<dbReference type="PDB" id="9F43">
    <property type="method" value="EM"/>
    <property type="resolution" value="3.49 A"/>
    <property type="chains" value="E=1-1335"/>
</dbReference>
<dbReference type="PDB" id="9F44">
    <property type="method" value="EM"/>
    <property type="resolution" value="3.68 A"/>
    <property type="chains" value="E/F=1-1335"/>
</dbReference>
<dbReference type="PDB" id="9F45">
    <property type="method" value="EM"/>
    <property type="resolution" value="3.74 A"/>
    <property type="chains" value="E/F=1-1335"/>
</dbReference>
<dbReference type="PDBsum" id="5H64"/>
<dbReference type="PDBsum" id="6BCU"/>
<dbReference type="PDBsum" id="6BCX"/>
<dbReference type="PDBsum" id="6SB0"/>
<dbReference type="PDBsum" id="6SB2"/>
<dbReference type="PDBsum" id="6U62"/>
<dbReference type="PDBsum" id="7OWG"/>
<dbReference type="PDBsum" id="7PEA"/>
<dbReference type="PDBsum" id="7PEB"/>
<dbReference type="PDBsum" id="7PEC"/>
<dbReference type="PDBsum" id="7UX2"/>
<dbReference type="PDBsum" id="7UXC"/>
<dbReference type="PDBsum" id="7UXH"/>
<dbReference type="PDBsum" id="8ERA"/>
<dbReference type="PDBsum" id="8RCH"/>
<dbReference type="PDBsum" id="8RCK"/>
<dbReference type="PDBsum" id="8RCN"/>
<dbReference type="PDBsum" id="9F42"/>
<dbReference type="PDBsum" id="9F43"/>
<dbReference type="PDBsum" id="9F44"/>
<dbReference type="PDBsum" id="9F45"/>
<dbReference type="EMDB" id="EMD-10132"/>
<dbReference type="EMDB" id="EMD-10133"/>
<dbReference type="EMDB" id="EMD-13097"/>
<dbReference type="EMDB" id="EMD-13350"/>
<dbReference type="EMDB" id="EMD-13351"/>
<dbReference type="EMDB" id="EMD-13352"/>
<dbReference type="EMDB" id="EMD-19052"/>
<dbReference type="EMDB" id="EMD-19053"/>
<dbReference type="EMDB" id="EMD-19056"/>
<dbReference type="EMDB" id="EMD-20660"/>
<dbReference type="EMDB" id="EMD-26846"/>
<dbReference type="EMDB" id="EMD-26857"/>
<dbReference type="EMDB" id="EMD-26861"/>
<dbReference type="EMDB" id="EMD-28551"/>
<dbReference type="EMDB" id="EMD-3212"/>
<dbReference type="EMDB" id="EMD-3213"/>
<dbReference type="EMDB" id="EMD-50181"/>
<dbReference type="EMDB" id="EMD-50182"/>
<dbReference type="EMDB" id="EMD-50183"/>
<dbReference type="EMDB" id="EMD-50184"/>
<dbReference type="EMDB" id="EMD-6668"/>
<dbReference type="EMDB" id="EMD-7086"/>
<dbReference type="EMDB" id="EMD-7087"/>
<dbReference type="SMR" id="Q8N122"/>
<dbReference type="BioGRID" id="121582">
    <property type="interactions" value="352"/>
</dbReference>
<dbReference type="ComplexPortal" id="CPX-503">
    <property type="entry name" value="mTORC1 complex"/>
</dbReference>
<dbReference type="CORUM" id="Q8N122"/>
<dbReference type="DIP" id="DIP-39482N"/>
<dbReference type="ELM" id="Q8N122"/>
<dbReference type="FunCoup" id="Q8N122">
    <property type="interactions" value="3411"/>
</dbReference>
<dbReference type="IntAct" id="Q8N122">
    <property type="interactions" value="106"/>
</dbReference>
<dbReference type="MINT" id="Q8N122"/>
<dbReference type="STRING" id="9606.ENSP00000307272"/>
<dbReference type="BindingDB" id="Q8N122"/>
<dbReference type="ChEMBL" id="CHEMBL3120040"/>
<dbReference type="GlyCosmos" id="Q8N122">
    <property type="glycosylation" value="1 site, 1 glycan"/>
</dbReference>
<dbReference type="GlyGen" id="Q8N122">
    <property type="glycosylation" value="6 sites, 1 N-linked glycan (1 site), 1 O-linked glycan (5 sites)"/>
</dbReference>
<dbReference type="iPTMnet" id="Q8N122"/>
<dbReference type="MetOSite" id="Q8N122"/>
<dbReference type="PhosphoSitePlus" id="Q8N122"/>
<dbReference type="SwissPalm" id="Q8N122"/>
<dbReference type="BioMuta" id="RPTOR"/>
<dbReference type="DMDM" id="46577501"/>
<dbReference type="CPTAC" id="CPTAC-5743"/>
<dbReference type="CPTAC" id="CPTAC-5744"/>
<dbReference type="CPTAC" id="non-CPTAC-5441"/>
<dbReference type="CPTAC" id="non-CPTAC-5442"/>
<dbReference type="CPTAC" id="non-CPTAC-5443"/>
<dbReference type="CPTAC" id="non-CPTAC-5444"/>
<dbReference type="CPTAC" id="non-CPTAC-5445"/>
<dbReference type="jPOST" id="Q8N122"/>
<dbReference type="MassIVE" id="Q8N122"/>
<dbReference type="PaxDb" id="9606-ENSP00000307272"/>
<dbReference type="PeptideAtlas" id="Q8N122"/>
<dbReference type="ProteomicsDB" id="27504"/>
<dbReference type="ProteomicsDB" id="71521">
    <molecule id="Q8N122-1"/>
</dbReference>
<dbReference type="ProteomicsDB" id="71522">
    <molecule id="Q8N122-2"/>
</dbReference>
<dbReference type="Pumba" id="Q8N122"/>
<dbReference type="Antibodypedia" id="4616">
    <property type="antibodies" value="617 antibodies from 44 providers"/>
</dbReference>
<dbReference type="CPTC" id="Q8N122">
    <property type="antibodies" value="2 antibodies"/>
</dbReference>
<dbReference type="DNASU" id="57521"/>
<dbReference type="Ensembl" id="ENST00000306801.8">
    <molecule id="Q8N122-1"/>
    <property type="protein sequence ID" value="ENSP00000307272.3"/>
    <property type="gene ID" value="ENSG00000141564.16"/>
</dbReference>
<dbReference type="Ensembl" id="ENST00000544334.6">
    <molecule id="Q8N122-3"/>
    <property type="protein sequence ID" value="ENSP00000442479.2"/>
    <property type="gene ID" value="ENSG00000141564.16"/>
</dbReference>
<dbReference type="Ensembl" id="ENST00000570891.5">
    <molecule id="Q8N122-2"/>
    <property type="protein sequence ID" value="ENSP00000460136.1"/>
    <property type="gene ID" value="ENSG00000141564.16"/>
</dbReference>
<dbReference type="GeneID" id="57521"/>
<dbReference type="KEGG" id="hsa:57521"/>
<dbReference type="MANE-Select" id="ENST00000306801.8">
    <property type="protein sequence ID" value="ENSP00000307272.3"/>
    <property type="RefSeq nucleotide sequence ID" value="NM_020761.3"/>
    <property type="RefSeq protein sequence ID" value="NP_065812.1"/>
</dbReference>
<dbReference type="UCSC" id="uc002jys.5">
    <molecule id="Q8N122-1"/>
    <property type="organism name" value="human"/>
</dbReference>
<dbReference type="AGR" id="HGNC:30287"/>
<dbReference type="CTD" id="57521"/>
<dbReference type="DisGeNET" id="57521"/>
<dbReference type="GeneCards" id="RPTOR"/>
<dbReference type="HGNC" id="HGNC:30287">
    <property type="gene designation" value="RPTOR"/>
</dbReference>
<dbReference type="HPA" id="ENSG00000141564">
    <property type="expression patterns" value="Low tissue specificity"/>
</dbReference>
<dbReference type="MalaCards" id="RPTOR"/>
<dbReference type="MIM" id="607130">
    <property type="type" value="gene"/>
</dbReference>
<dbReference type="neXtProt" id="NX_Q8N122"/>
<dbReference type="OpenTargets" id="ENSG00000141564"/>
<dbReference type="PharmGKB" id="PA165432629"/>
<dbReference type="VEuPathDB" id="HostDB:ENSG00000141564"/>
<dbReference type="eggNOG" id="KOG1517">
    <property type="taxonomic scope" value="Eukaryota"/>
</dbReference>
<dbReference type="GeneTree" id="ENSGT00640000091541"/>
<dbReference type="HOGENOM" id="CLU_061814_0_0_1"/>
<dbReference type="InParanoid" id="Q8N122"/>
<dbReference type="OMA" id="TEVCTND"/>
<dbReference type="OrthoDB" id="10262360at2759"/>
<dbReference type="PAN-GO" id="Q8N122">
    <property type="GO annotations" value="9 GO annotations based on evolutionary models"/>
</dbReference>
<dbReference type="PhylomeDB" id="Q8N122"/>
<dbReference type="TreeFam" id="TF105729"/>
<dbReference type="PathwayCommons" id="Q8N122"/>
<dbReference type="Reactome" id="R-HSA-1632852">
    <property type="pathway name" value="Macroautophagy"/>
</dbReference>
<dbReference type="Reactome" id="R-HSA-165159">
    <property type="pathway name" value="MTOR signalling"/>
</dbReference>
<dbReference type="Reactome" id="R-HSA-166208">
    <property type="pathway name" value="mTORC1-mediated signalling"/>
</dbReference>
<dbReference type="Reactome" id="R-HSA-3371571">
    <property type="pathway name" value="HSF1-dependent transactivation"/>
</dbReference>
<dbReference type="Reactome" id="R-HSA-380972">
    <property type="pathway name" value="Energy dependent regulation of mTOR by LKB1-AMPK"/>
</dbReference>
<dbReference type="Reactome" id="R-HSA-5628897">
    <property type="pathway name" value="TP53 Regulates Metabolic Genes"/>
</dbReference>
<dbReference type="Reactome" id="R-HSA-8943724">
    <property type="pathway name" value="Regulation of PTEN gene transcription"/>
</dbReference>
<dbReference type="Reactome" id="R-HSA-9639288">
    <property type="pathway name" value="Amino acids regulate mTORC1"/>
</dbReference>
<dbReference type="SABIO-RK" id="Q8N122"/>
<dbReference type="SignaLink" id="Q8N122"/>
<dbReference type="SIGNOR" id="Q8N122"/>
<dbReference type="BioGRID-ORCS" id="57521">
    <property type="hits" value="665 hits in 1182 CRISPR screens"/>
</dbReference>
<dbReference type="CD-CODE" id="DEE660B4">
    <property type="entry name" value="Stress granule"/>
</dbReference>
<dbReference type="ChiTaRS" id="RPTOR">
    <property type="organism name" value="human"/>
</dbReference>
<dbReference type="GeneWiki" id="RPTOR"/>
<dbReference type="GenomeRNAi" id="57521"/>
<dbReference type="Pharos" id="Q8N122">
    <property type="development level" value="Tbio"/>
</dbReference>
<dbReference type="PRO" id="PR:Q8N122"/>
<dbReference type="Proteomes" id="UP000005640">
    <property type="component" value="Chromosome 17"/>
</dbReference>
<dbReference type="RNAct" id="Q8N122">
    <property type="molecule type" value="protein"/>
</dbReference>
<dbReference type="Bgee" id="ENSG00000141564">
    <property type="expression patterns" value="Expressed in sural nerve and 136 other cell types or tissues"/>
</dbReference>
<dbReference type="ExpressionAtlas" id="Q8N122">
    <property type="expression patterns" value="baseline and differential"/>
</dbReference>
<dbReference type="GO" id="GO:0005737">
    <property type="term" value="C:cytoplasm"/>
    <property type="evidence" value="ECO:0000314"/>
    <property type="project" value="UniProtKB"/>
</dbReference>
<dbReference type="GO" id="GO:0010494">
    <property type="term" value="C:cytoplasmic stress granule"/>
    <property type="evidence" value="ECO:0000314"/>
    <property type="project" value="UniProtKB"/>
</dbReference>
<dbReference type="GO" id="GO:0005829">
    <property type="term" value="C:cytosol"/>
    <property type="evidence" value="ECO:0000314"/>
    <property type="project" value="HPA"/>
</dbReference>
<dbReference type="GO" id="GO:0030425">
    <property type="term" value="C:dendrite"/>
    <property type="evidence" value="ECO:0007669"/>
    <property type="project" value="Ensembl"/>
</dbReference>
<dbReference type="GO" id="GO:0005765">
    <property type="term" value="C:lysosomal membrane"/>
    <property type="evidence" value="ECO:0000314"/>
    <property type="project" value="UniProt"/>
</dbReference>
<dbReference type="GO" id="GO:0005764">
    <property type="term" value="C:lysosome"/>
    <property type="evidence" value="ECO:0000314"/>
    <property type="project" value="HPA"/>
</dbReference>
<dbReference type="GO" id="GO:0043025">
    <property type="term" value="C:neuronal cell body"/>
    <property type="evidence" value="ECO:0007669"/>
    <property type="project" value="Ensembl"/>
</dbReference>
<dbReference type="GO" id="GO:0005654">
    <property type="term" value="C:nucleoplasm"/>
    <property type="evidence" value="ECO:0000314"/>
    <property type="project" value="HPA"/>
</dbReference>
<dbReference type="GO" id="GO:1902554">
    <property type="term" value="C:serine/threonine protein kinase complex"/>
    <property type="evidence" value="ECO:0000314"/>
    <property type="project" value="UniProt"/>
</dbReference>
<dbReference type="GO" id="GO:0031931">
    <property type="term" value="C:TORC1 complex"/>
    <property type="evidence" value="ECO:0000314"/>
    <property type="project" value="UniProtKB"/>
</dbReference>
<dbReference type="GO" id="GO:0071889">
    <property type="term" value="F:14-3-3 protein binding"/>
    <property type="evidence" value="ECO:0000314"/>
    <property type="project" value="UniProtKB"/>
</dbReference>
<dbReference type="GO" id="GO:0140767">
    <property type="term" value="F:enzyme-substrate adaptor activity"/>
    <property type="evidence" value="ECO:0000314"/>
    <property type="project" value="UniProtKB"/>
</dbReference>
<dbReference type="GO" id="GO:0030295">
    <property type="term" value="F:protein kinase activator activity"/>
    <property type="evidence" value="ECO:0000314"/>
    <property type="project" value="WormBase"/>
</dbReference>
<dbReference type="GO" id="GO:0019901">
    <property type="term" value="F:protein kinase binding"/>
    <property type="evidence" value="ECO:0000353"/>
    <property type="project" value="UniProtKB"/>
</dbReference>
<dbReference type="GO" id="GO:0030291">
    <property type="term" value="F:protein serine/threonine kinase inhibitor activity"/>
    <property type="evidence" value="ECO:0000314"/>
    <property type="project" value="WormBase"/>
</dbReference>
<dbReference type="GO" id="GO:0044877">
    <property type="term" value="F:protein-containing complex binding"/>
    <property type="evidence" value="ECO:0000353"/>
    <property type="project" value="UniProtKB"/>
</dbReference>
<dbReference type="GO" id="GO:0030674">
    <property type="term" value="F:protein-macromolecule adaptor activity"/>
    <property type="evidence" value="ECO:0000314"/>
    <property type="project" value="UniProtKB"/>
</dbReference>
<dbReference type="GO" id="GO:0031267">
    <property type="term" value="F:small GTPase binding"/>
    <property type="evidence" value="ECO:0000314"/>
    <property type="project" value="UniProtKB"/>
</dbReference>
<dbReference type="GO" id="GO:0071230">
    <property type="term" value="P:cellular response to amino acid stimulus"/>
    <property type="evidence" value="ECO:0000315"/>
    <property type="project" value="UniProtKB"/>
</dbReference>
<dbReference type="GO" id="GO:0071333">
    <property type="term" value="P:cellular response to glucose stimulus"/>
    <property type="evidence" value="ECO:0000314"/>
    <property type="project" value="UniProtKB"/>
</dbReference>
<dbReference type="GO" id="GO:0071456">
    <property type="term" value="P:cellular response to hypoxia"/>
    <property type="evidence" value="ECO:0000303"/>
    <property type="project" value="ComplexPortal"/>
</dbReference>
<dbReference type="GO" id="GO:0071233">
    <property type="term" value="P:cellular response to L-leucine"/>
    <property type="evidence" value="ECO:0000314"/>
    <property type="project" value="CAFA"/>
</dbReference>
<dbReference type="GO" id="GO:0031669">
    <property type="term" value="P:cellular response to nutrient levels"/>
    <property type="evidence" value="ECO:0000314"/>
    <property type="project" value="UniProt"/>
</dbReference>
<dbReference type="GO" id="GO:0071470">
    <property type="term" value="P:cellular response to osmotic stress"/>
    <property type="evidence" value="ECO:0000303"/>
    <property type="project" value="ComplexPortal"/>
</dbReference>
<dbReference type="GO" id="GO:0009267">
    <property type="term" value="P:cellular response to starvation"/>
    <property type="evidence" value="ECO:0000318"/>
    <property type="project" value="GO_Central"/>
</dbReference>
<dbReference type="GO" id="GO:0006974">
    <property type="term" value="P:DNA damage response"/>
    <property type="evidence" value="ECO:0000303"/>
    <property type="project" value="ComplexPortal"/>
</dbReference>
<dbReference type="GO" id="GO:0010507">
    <property type="term" value="P:negative regulation of autophagy"/>
    <property type="evidence" value="ECO:0000314"/>
    <property type="project" value="UniProt"/>
</dbReference>
<dbReference type="GO" id="GO:0030307">
    <property type="term" value="P:positive regulation of cell growth"/>
    <property type="evidence" value="ECO:0000315"/>
    <property type="project" value="ParkinsonsUK-UCL"/>
</dbReference>
<dbReference type="GO" id="GO:0001938">
    <property type="term" value="P:positive regulation of endothelial cell proliferation"/>
    <property type="evidence" value="ECO:0007669"/>
    <property type="project" value="Ensembl"/>
</dbReference>
<dbReference type="GO" id="GO:1900087">
    <property type="term" value="P:positive regulation of G1/S transition of mitotic cell cycle"/>
    <property type="evidence" value="ECO:0000315"/>
    <property type="project" value="ParkinsonsUK-UCL"/>
</dbReference>
<dbReference type="GO" id="GO:0045821">
    <property type="term" value="P:positive regulation of glycolytic process"/>
    <property type="evidence" value="ECO:0000303"/>
    <property type="project" value="ComplexPortal"/>
</dbReference>
<dbReference type="GO" id="GO:0046889">
    <property type="term" value="P:positive regulation of lipid biosynthetic process"/>
    <property type="evidence" value="ECO:0000303"/>
    <property type="project" value="ComplexPortal"/>
</dbReference>
<dbReference type="GO" id="GO:1901331">
    <property type="term" value="P:positive regulation of odontoblast differentiation"/>
    <property type="evidence" value="ECO:0000250"/>
    <property type="project" value="UniProtKB"/>
</dbReference>
<dbReference type="GO" id="GO:0045672">
    <property type="term" value="P:positive regulation of osteoclast differentiation"/>
    <property type="evidence" value="ECO:0000250"/>
    <property type="project" value="UniProtKB"/>
</dbReference>
<dbReference type="GO" id="GO:1905857">
    <property type="term" value="P:positive regulation of pentose-phosphate shunt"/>
    <property type="evidence" value="ECO:0000303"/>
    <property type="project" value="ComplexPortal"/>
</dbReference>
<dbReference type="GO" id="GO:0032008">
    <property type="term" value="P:positive regulation of TOR signaling"/>
    <property type="evidence" value="ECO:0000314"/>
    <property type="project" value="UniProtKB"/>
</dbReference>
<dbReference type="GO" id="GO:0045945">
    <property type="term" value="P:positive regulation of transcription by RNA polymerase III"/>
    <property type="evidence" value="ECO:0000315"/>
    <property type="project" value="UniProtKB"/>
</dbReference>
<dbReference type="GO" id="GO:0010506">
    <property type="term" value="P:regulation of autophagy"/>
    <property type="evidence" value="ECO:0000318"/>
    <property type="project" value="GO_Central"/>
</dbReference>
<dbReference type="GO" id="GO:0001558">
    <property type="term" value="P:regulation of cell growth"/>
    <property type="evidence" value="ECO:0000315"/>
    <property type="project" value="UniProtKB"/>
</dbReference>
<dbReference type="GO" id="GO:0008361">
    <property type="term" value="P:regulation of cell size"/>
    <property type="evidence" value="ECO:0000315"/>
    <property type="project" value="UniProtKB"/>
</dbReference>
<dbReference type="GO" id="GO:0009410">
    <property type="term" value="P:response to xenobiotic stimulus"/>
    <property type="evidence" value="ECO:0000250"/>
    <property type="project" value="UniProtKB"/>
</dbReference>
<dbReference type="GO" id="GO:0035176">
    <property type="term" value="P:social behavior"/>
    <property type="evidence" value="ECO:0000250"/>
    <property type="project" value="UniProtKB"/>
</dbReference>
<dbReference type="GO" id="GO:0031929">
    <property type="term" value="P:TOR signaling"/>
    <property type="evidence" value="ECO:0000314"/>
    <property type="project" value="UniProtKB"/>
</dbReference>
<dbReference type="GO" id="GO:0038202">
    <property type="term" value="P:TORC1 signaling"/>
    <property type="evidence" value="ECO:0000314"/>
    <property type="project" value="UniProtKB"/>
</dbReference>
<dbReference type="FunFam" id="2.130.10.10:FF:000137">
    <property type="entry name" value="Regulatory-associated protein of mTOR isoform 1"/>
    <property type="match status" value="1"/>
</dbReference>
<dbReference type="FunFam" id="1.25.10.10:FF:000065">
    <property type="entry name" value="Regulatory-associated protein of MTOR, complex 1"/>
    <property type="match status" value="1"/>
</dbReference>
<dbReference type="FunFam" id="2.130.10.10:FF:000072">
    <property type="entry name" value="Regulatory-associated protein of MTOR, complex 1"/>
    <property type="match status" value="1"/>
</dbReference>
<dbReference type="Gene3D" id="1.25.10.10">
    <property type="entry name" value="Leucine-rich Repeat Variant"/>
    <property type="match status" value="1"/>
</dbReference>
<dbReference type="Gene3D" id="2.130.10.10">
    <property type="entry name" value="YVTN repeat-like/Quinoprotein amine dehydrogenase"/>
    <property type="match status" value="2"/>
</dbReference>
<dbReference type="InterPro" id="IPR011989">
    <property type="entry name" value="ARM-like"/>
</dbReference>
<dbReference type="InterPro" id="IPR016024">
    <property type="entry name" value="ARM-type_fold"/>
</dbReference>
<dbReference type="InterPro" id="IPR000357">
    <property type="entry name" value="HEAT"/>
</dbReference>
<dbReference type="InterPro" id="IPR004083">
    <property type="entry name" value="Raptor"/>
</dbReference>
<dbReference type="InterPro" id="IPR029347">
    <property type="entry name" value="Raptor_N"/>
</dbReference>
<dbReference type="InterPro" id="IPR015943">
    <property type="entry name" value="WD40/YVTN_repeat-like_dom_sf"/>
</dbReference>
<dbReference type="InterPro" id="IPR036322">
    <property type="entry name" value="WD40_repeat_dom_sf"/>
</dbReference>
<dbReference type="InterPro" id="IPR001680">
    <property type="entry name" value="WD40_rpt"/>
</dbReference>
<dbReference type="PANTHER" id="PTHR12848">
    <property type="entry name" value="REGULATORY-ASSOCIATED PROTEIN OF MTOR"/>
    <property type="match status" value="1"/>
</dbReference>
<dbReference type="PANTHER" id="PTHR12848:SF16">
    <property type="entry name" value="REGULATORY-ASSOCIATED PROTEIN OF MTOR"/>
    <property type="match status" value="1"/>
</dbReference>
<dbReference type="Pfam" id="PF02985">
    <property type="entry name" value="HEAT"/>
    <property type="match status" value="2"/>
</dbReference>
<dbReference type="Pfam" id="PF14538">
    <property type="entry name" value="Raptor_N"/>
    <property type="match status" value="1"/>
</dbReference>
<dbReference type="Pfam" id="PF00400">
    <property type="entry name" value="WD40"/>
    <property type="match status" value="1"/>
</dbReference>
<dbReference type="PRINTS" id="PR01547">
    <property type="entry name" value="YEAST176DUF"/>
</dbReference>
<dbReference type="SMART" id="SM01302">
    <property type="entry name" value="Raptor_N"/>
    <property type="match status" value="1"/>
</dbReference>
<dbReference type="SMART" id="SM00320">
    <property type="entry name" value="WD40"/>
    <property type="match status" value="7"/>
</dbReference>
<dbReference type="SUPFAM" id="SSF48371">
    <property type="entry name" value="ARM repeat"/>
    <property type="match status" value="1"/>
</dbReference>
<dbReference type="SUPFAM" id="SSF50978">
    <property type="entry name" value="WD40 repeat-like"/>
    <property type="match status" value="1"/>
</dbReference>
<dbReference type="PROSITE" id="PS50294">
    <property type="entry name" value="WD_REPEATS_REGION"/>
    <property type="match status" value="1"/>
</dbReference>